<evidence type="ECO:0000269" key="1">
    <source>
    </source>
</evidence>
<evidence type="ECO:0000269" key="2">
    <source>
    </source>
</evidence>
<evidence type="ECO:0000269" key="3">
    <source>
    </source>
</evidence>
<evidence type="ECO:0000269" key="4">
    <source>
    </source>
</evidence>
<evidence type="ECO:0000269" key="5">
    <source>
    </source>
</evidence>
<evidence type="ECO:0000269" key="6">
    <source>
    </source>
</evidence>
<evidence type="ECO:0000269" key="7">
    <source>
    </source>
</evidence>
<evidence type="ECO:0000269" key="8">
    <source>
    </source>
</evidence>
<evidence type="ECO:0000269" key="9">
    <source>
    </source>
</evidence>
<evidence type="ECO:0000269" key="10">
    <source>
    </source>
</evidence>
<evidence type="ECO:0000269" key="11">
    <source>
    </source>
</evidence>
<evidence type="ECO:0000269" key="12">
    <source>
    </source>
</evidence>
<evidence type="ECO:0000269" key="13">
    <source>
    </source>
</evidence>
<evidence type="ECO:0000269" key="14">
    <source>
    </source>
</evidence>
<evidence type="ECO:0000269" key="15">
    <source>
    </source>
</evidence>
<evidence type="ECO:0000269" key="16">
    <source>
    </source>
</evidence>
<evidence type="ECO:0000269" key="17">
    <source>
    </source>
</evidence>
<evidence type="ECO:0000269" key="18">
    <source>
    </source>
</evidence>
<evidence type="ECO:0000269" key="19">
    <source>
    </source>
</evidence>
<evidence type="ECO:0000269" key="20">
    <source>
    </source>
</evidence>
<evidence type="ECO:0000269" key="21">
    <source>
    </source>
</evidence>
<evidence type="ECO:0000269" key="22">
    <source>
    </source>
</evidence>
<evidence type="ECO:0000269" key="23">
    <source>
    </source>
</evidence>
<evidence type="ECO:0000269" key="24">
    <source>
    </source>
</evidence>
<evidence type="ECO:0000269" key="25">
    <source>
    </source>
</evidence>
<evidence type="ECO:0000269" key="26">
    <source>
    </source>
</evidence>
<evidence type="ECO:0000269" key="27">
    <source>
    </source>
</evidence>
<evidence type="ECO:0000269" key="28">
    <source>
    </source>
</evidence>
<evidence type="ECO:0000269" key="29">
    <source>
    </source>
</evidence>
<evidence type="ECO:0000269" key="30">
    <source>
    </source>
</evidence>
<evidence type="ECO:0000269" key="31">
    <source>
    </source>
</evidence>
<evidence type="ECO:0000269" key="32">
    <source>
    </source>
</evidence>
<evidence type="ECO:0000269" key="33">
    <source>
    </source>
</evidence>
<evidence type="ECO:0000269" key="34">
    <source>
    </source>
</evidence>
<evidence type="ECO:0000269" key="35">
    <source>
    </source>
</evidence>
<evidence type="ECO:0000269" key="36">
    <source>
    </source>
</evidence>
<evidence type="ECO:0000269" key="37">
    <source>
    </source>
</evidence>
<evidence type="ECO:0000269" key="38">
    <source>
    </source>
</evidence>
<evidence type="ECO:0000269" key="39">
    <source>
    </source>
</evidence>
<evidence type="ECO:0000269" key="40">
    <source>
    </source>
</evidence>
<evidence type="ECO:0000269" key="41">
    <source>
    </source>
</evidence>
<evidence type="ECO:0000269" key="42">
    <source>
    </source>
</evidence>
<evidence type="ECO:0000269" key="43">
    <source>
    </source>
</evidence>
<evidence type="ECO:0000269" key="44">
    <source>
    </source>
</evidence>
<evidence type="ECO:0000269" key="45">
    <source>
    </source>
</evidence>
<evidence type="ECO:0000269" key="46">
    <source>
    </source>
</evidence>
<evidence type="ECO:0000269" key="47">
    <source>
    </source>
</evidence>
<evidence type="ECO:0000269" key="48">
    <source>
    </source>
</evidence>
<evidence type="ECO:0000269" key="49">
    <source>
    </source>
</evidence>
<evidence type="ECO:0000269" key="50">
    <source>
    </source>
</evidence>
<evidence type="ECO:0000269" key="51">
    <source>
    </source>
</evidence>
<evidence type="ECO:0000269" key="52">
    <source>
    </source>
</evidence>
<evidence type="ECO:0000269" key="53">
    <source>
    </source>
</evidence>
<evidence type="ECO:0000269" key="54">
    <source>
    </source>
</evidence>
<evidence type="ECO:0000269" key="55">
    <source>
    </source>
</evidence>
<evidence type="ECO:0000269" key="56">
    <source>
    </source>
</evidence>
<evidence type="ECO:0000269" key="57">
    <source ref="6"/>
</evidence>
<evidence type="ECO:0000303" key="58">
    <source>
    </source>
</evidence>
<evidence type="ECO:0000305" key="59"/>
<evidence type="ECO:0000305" key="60">
    <source>
    </source>
</evidence>
<evidence type="ECO:0007744" key="61">
    <source>
        <dbReference type="PDB" id="1N2K"/>
    </source>
</evidence>
<evidence type="ECO:0007829" key="62">
    <source>
        <dbReference type="PDB" id="1AUK"/>
    </source>
</evidence>
<evidence type="ECO:0007829" key="63">
    <source>
        <dbReference type="PDB" id="1E1Z"/>
    </source>
</evidence>
<sequence>MGAPRSLLLALAAGLAVARPPNIVLIFADDLGYGDLGCYGHPSSTTPNLDQLAAGGLRFTDFYVPVSLCTPSRAALLTGRLPVRMGMYPGVLVPSSRGGLPLEEVTVAEVLAARGYLTGMAGKWHLGVGPEGAFLPPHQGFHRFLGIPYSHDQGPCQNLTCFPPATPCDGGCDQGLVPIPLLANLSVEAQPPWLPGLEARYMAFAHDLMADAQRQDRPFFLYYASHHTHYPQFSGQSFAERSGRGPFGDSLMELDAAVGTLMTAIGDLGLLEETLVIFTADNGPETMRMSRGGCSGLLRCGKGTTYEGGVREPALAFWPGHIAPGVTHELASSLDLLPTLAALAGAPLPNVTLDGFDLSPLLLGTGKSPRQSLFFYPSYPDEVRGVFAVRTGKYKAHFFTQGSAHSDTTADPACHASSSLTAHEPPLLYDLSKDPGENYNLLGGVAGATPEVLQALKQLQLLKAQLDAAVTFGPSQVARGEDPALQICCHPGCTPRPACCHCPDPHA</sequence>
<organism>
    <name type="scientific">Homo sapiens</name>
    <name type="common">Human</name>
    <dbReference type="NCBI Taxonomy" id="9606"/>
    <lineage>
        <taxon>Eukaryota</taxon>
        <taxon>Metazoa</taxon>
        <taxon>Chordata</taxon>
        <taxon>Craniata</taxon>
        <taxon>Vertebrata</taxon>
        <taxon>Euteleostomi</taxon>
        <taxon>Mammalia</taxon>
        <taxon>Eutheria</taxon>
        <taxon>Euarchontoglires</taxon>
        <taxon>Primates</taxon>
        <taxon>Haplorrhini</taxon>
        <taxon>Catarrhini</taxon>
        <taxon>Hominidae</taxon>
        <taxon>Homo</taxon>
    </lineage>
</organism>
<protein>
    <recommendedName>
        <fullName>Arylsulfatase A</fullName>
        <shortName>ASA</shortName>
        <ecNumber evidence="5 33">3.1.6.8</ecNumber>
    </recommendedName>
    <alternativeName>
        <fullName>Cerebroside-sulfatase</fullName>
    </alternativeName>
    <component>
        <recommendedName>
            <fullName>Arylsulfatase A component B</fullName>
        </recommendedName>
    </component>
    <component>
        <recommendedName>
            <fullName>Arylsulfatase A component C</fullName>
        </recommendedName>
    </component>
</protein>
<accession>P15289</accession>
<accession>B2RCA6</accession>
<accession>B7XD04</accession>
<accession>F8WCC8</accession>
<accession>Q6ICI5</accession>
<accession>Q96CJ0</accession>
<name>ARSA_HUMAN</name>
<dbReference type="EC" id="3.1.6.8" evidence="5 33"/>
<dbReference type="EMBL" id="X52151">
    <property type="protein sequence ID" value="CAA36399.1"/>
    <property type="molecule type" value="mRNA"/>
</dbReference>
<dbReference type="EMBL" id="X52150">
    <property type="protein sequence ID" value="CAA36398.1"/>
    <property type="molecule type" value="Genomic_DNA"/>
</dbReference>
<dbReference type="EMBL" id="AB448736">
    <property type="protein sequence ID" value="BAH11167.1"/>
    <property type="status" value="ALT_INIT"/>
    <property type="molecule type" value="mRNA"/>
</dbReference>
<dbReference type="EMBL" id="CR456383">
    <property type="protein sequence ID" value="CAG30269.1"/>
    <property type="molecule type" value="mRNA"/>
</dbReference>
<dbReference type="EMBL" id="AK098659">
    <property type="status" value="NOT_ANNOTATED_CDS"/>
    <property type="molecule type" value="mRNA"/>
</dbReference>
<dbReference type="EMBL" id="AK315011">
    <property type="protein sequence ID" value="BAG37503.1"/>
    <property type="molecule type" value="mRNA"/>
</dbReference>
<dbReference type="EMBL" id="AY271820">
    <property type="protein sequence ID" value="AAP03431.1"/>
    <property type="molecule type" value="Genomic_DNA"/>
</dbReference>
<dbReference type="EMBL" id="U62317">
    <property type="protein sequence ID" value="AAB03341.1"/>
    <property type="status" value="ALT_INIT"/>
    <property type="molecule type" value="Genomic_DNA"/>
</dbReference>
<dbReference type="EMBL" id="BC014210">
    <property type="protein sequence ID" value="AAH14210.2"/>
    <property type="molecule type" value="mRNA"/>
</dbReference>
<dbReference type="CCDS" id="CCDS46736.1">
    <molecule id="P15289-2"/>
</dbReference>
<dbReference type="PIR" id="S11031">
    <property type="entry name" value="KJHUAA"/>
</dbReference>
<dbReference type="RefSeq" id="NP_000478.3">
    <property type="nucleotide sequence ID" value="NM_000487.5"/>
</dbReference>
<dbReference type="RefSeq" id="NP_001078894.2">
    <property type="nucleotide sequence ID" value="NM_001085425.2"/>
</dbReference>
<dbReference type="RefSeq" id="NP_001078895.2">
    <property type="nucleotide sequence ID" value="NM_001085426.2"/>
</dbReference>
<dbReference type="RefSeq" id="NP_001078896.2">
    <property type="nucleotide sequence ID" value="NM_001085427.2"/>
</dbReference>
<dbReference type="RefSeq" id="NP_001078897.1">
    <molecule id="P15289-2"/>
    <property type="nucleotide sequence ID" value="NM_001085428.3"/>
</dbReference>
<dbReference type="RefSeq" id="NP_001349711.1">
    <molecule id="P15289-2"/>
    <property type="nucleotide sequence ID" value="NM_001362782.2"/>
</dbReference>
<dbReference type="RefSeq" id="XP_011528992.1">
    <property type="nucleotide sequence ID" value="XM_011530690.2"/>
</dbReference>
<dbReference type="PDB" id="1AUK">
    <property type="method" value="X-ray"/>
    <property type="resolution" value="2.10 A"/>
    <property type="chains" value="A=19-507"/>
</dbReference>
<dbReference type="PDB" id="1E1Z">
    <property type="method" value="X-ray"/>
    <property type="resolution" value="2.40 A"/>
    <property type="chains" value="P=19-507"/>
</dbReference>
<dbReference type="PDB" id="1E2S">
    <property type="method" value="X-ray"/>
    <property type="resolution" value="2.35 A"/>
    <property type="chains" value="P=19-507"/>
</dbReference>
<dbReference type="PDB" id="1E33">
    <property type="method" value="X-ray"/>
    <property type="resolution" value="2.50 A"/>
    <property type="chains" value="P=19-507"/>
</dbReference>
<dbReference type="PDB" id="1E3C">
    <property type="method" value="X-ray"/>
    <property type="resolution" value="2.65 A"/>
    <property type="chains" value="P=19-507"/>
</dbReference>
<dbReference type="PDB" id="1N2K">
    <property type="method" value="X-ray"/>
    <property type="resolution" value="2.75 A"/>
    <property type="chains" value="A=19-507"/>
</dbReference>
<dbReference type="PDB" id="1N2L">
    <property type="method" value="X-ray"/>
    <property type="resolution" value="3.20 A"/>
    <property type="chains" value="A=19-507"/>
</dbReference>
<dbReference type="PDB" id="2AIJ">
    <property type="method" value="X-ray"/>
    <property type="resolution" value="1.55 A"/>
    <property type="chains" value="P=69-73"/>
</dbReference>
<dbReference type="PDB" id="2AIK">
    <property type="method" value="X-ray"/>
    <property type="resolution" value="1.73 A"/>
    <property type="chains" value="P=68-74"/>
</dbReference>
<dbReference type="PDB" id="2HI8">
    <property type="method" value="X-ray"/>
    <property type="resolution" value="1.64 A"/>
    <property type="chains" value="P=69-73"/>
</dbReference>
<dbReference type="PDBsum" id="1AUK"/>
<dbReference type="PDBsum" id="1E1Z"/>
<dbReference type="PDBsum" id="1E2S"/>
<dbReference type="PDBsum" id="1E33"/>
<dbReference type="PDBsum" id="1E3C"/>
<dbReference type="PDBsum" id="1N2K"/>
<dbReference type="PDBsum" id="1N2L"/>
<dbReference type="PDBsum" id="2AIJ"/>
<dbReference type="PDBsum" id="2AIK"/>
<dbReference type="PDBsum" id="2HI8"/>
<dbReference type="SMR" id="P15289"/>
<dbReference type="BioGRID" id="106903">
    <property type="interactions" value="91"/>
</dbReference>
<dbReference type="FunCoup" id="P15289">
    <property type="interactions" value="411"/>
</dbReference>
<dbReference type="IntAct" id="P15289">
    <property type="interactions" value="70"/>
</dbReference>
<dbReference type="MINT" id="P15289"/>
<dbReference type="STRING" id="9606.ENSP00000216124"/>
<dbReference type="BindingDB" id="P15289"/>
<dbReference type="ChEMBL" id="CHEMBL2193"/>
<dbReference type="DrugBank" id="DB03821">
    <property type="generic name" value="2-Amino-3-Hydroxy-3-Phosphonooxy-Propionic Acid"/>
</dbReference>
<dbReference type="DrugBank" id="DB01800">
    <property type="generic name" value="4-Nitrocatechol sulfate"/>
</dbReference>
<dbReference type="DrugBank" id="DB01141">
    <property type="generic name" value="Micafungin"/>
</dbReference>
<dbReference type="DrugBank" id="DB04786">
    <property type="generic name" value="Suramin"/>
</dbReference>
<dbReference type="SwissLipids" id="SLP:000000913"/>
<dbReference type="GlyConnect" id="61">
    <property type="glycosylation" value="11 N-Linked glycans"/>
</dbReference>
<dbReference type="GlyCosmos" id="P15289">
    <property type="glycosylation" value="3 sites, 27 glycans"/>
</dbReference>
<dbReference type="GlyGen" id="P15289">
    <property type="glycosylation" value="5 sites, 26 N-linked glycans (4 sites), 1 O-linked glycan (1 site)"/>
</dbReference>
<dbReference type="iPTMnet" id="P15289"/>
<dbReference type="PhosphoSitePlus" id="P15289"/>
<dbReference type="SwissPalm" id="P15289"/>
<dbReference type="BioMuta" id="ARSA"/>
<dbReference type="jPOST" id="P15289"/>
<dbReference type="MassIVE" id="P15289"/>
<dbReference type="PaxDb" id="9606-ENSP00000216124"/>
<dbReference type="PeptideAtlas" id="P15289"/>
<dbReference type="ProteomicsDB" id="31108"/>
<dbReference type="ProteomicsDB" id="53123">
    <molecule id="P15289-1"/>
</dbReference>
<dbReference type="Pumba" id="P15289"/>
<dbReference type="Antibodypedia" id="215">
    <property type="antibodies" value="472 antibodies from 35 providers"/>
</dbReference>
<dbReference type="DNASU" id="410"/>
<dbReference type="Ensembl" id="ENST00000453344.6">
    <molecule id="P15289-2"/>
    <property type="protein sequence ID" value="ENSP00000412542.2"/>
    <property type="gene ID" value="ENSG00000100299.18"/>
</dbReference>
<dbReference type="GeneID" id="410"/>
<dbReference type="KEGG" id="hsa:410"/>
<dbReference type="UCSC" id="uc003bmz.6">
    <molecule id="P15289-1"/>
    <property type="organism name" value="human"/>
</dbReference>
<dbReference type="AGR" id="HGNC:713"/>
<dbReference type="CTD" id="410"/>
<dbReference type="DisGeNET" id="410"/>
<dbReference type="GeneCards" id="ARSA"/>
<dbReference type="GeneReviews" id="ARSA"/>
<dbReference type="HGNC" id="HGNC:713">
    <property type="gene designation" value="ARSA"/>
</dbReference>
<dbReference type="HPA" id="ENSG00000100299">
    <property type="expression patterns" value="Low tissue specificity"/>
</dbReference>
<dbReference type="MalaCards" id="ARSA"/>
<dbReference type="MIM" id="250100">
    <property type="type" value="phenotype"/>
</dbReference>
<dbReference type="MIM" id="272200">
    <property type="type" value="phenotype"/>
</dbReference>
<dbReference type="MIM" id="607574">
    <property type="type" value="gene"/>
</dbReference>
<dbReference type="neXtProt" id="NX_P15289"/>
<dbReference type="OpenTargets" id="ENSG00000100299"/>
<dbReference type="Orphanet" id="309271">
    <property type="disease" value="Metachromatic leukodystrophy, adult form"/>
</dbReference>
<dbReference type="Orphanet" id="309263">
    <property type="disease" value="Metachromatic leukodystrophy, juvenile form"/>
</dbReference>
<dbReference type="Orphanet" id="309256">
    <property type="disease" value="Metachromatic leukodystrophy, late infantile form"/>
</dbReference>
<dbReference type="PharmGKB" id="PA25005"/>
<dbReference type="VEuPathDB" id="HostDB:ENSG00000100299"/>
<dbReference type="eggNOG" id="KOG3867">
    <property type="taxonomic scope" value="Eukaryota"/>
</dbReference>
<dbReference type="GeneTree" id="ENSGT00940000157610"/>
<dbReference type="InParanoid" id="P15289"/>
<dbReference type="OrthoDB" id="103349at2759"/>
<dbReference type="PAN-GO" id="P15289">
    <property type="GO annotations" value="1 GO annotation based on evolutionary models"/>
</dbReference>
<dbReference type="PhylomeDB" id="P15289"/>
<dbReference type="BioCyc" id="MetaCyc:HS02032-MONOMER"/>
<dbReference type="PathwayCommons" id="P15289"/>
<dbReference type="Reactome" id="R-HSA-1663150">
    <property type="pathway name" value="The activation of arylsulfatases"/>
</dbReference>
<dbReference type="Reactome" id="R-HSA-6798695">
    <property type="pathway name" value="Neutrophil degranulation"/>
</dbReference>
<dbReference type="Reactome" id="R-HSA-9840310">
    <property type="pathway name" value="Glycosphingolipid catabolism"/>
</dbReference>
<dbReference type="SABIO-RK" id="P15289"/>
<dbReference type="SignaLink" id="P15289"/>
<dbReference type="SIGNOR" id="P15289"/>
<dbReference type="BioGRID-ORCS" id="410">
    <property type="hits" value="36 hits in 1164 CRISPR screens"/>
</dbReference>
<dbReference type="ChiTaRS" id="ARSA">
    <property type="organism name" value="human"/>
</dbReference>
<dbReference type="EvolutionaryTrace" id="P15289"/>
<dbReference type="GeneWiki" id="Arylsulfatase_A"/>
<dbReference type="GenomeRNAi" id="410"/>
<dbReference type="Pharos" id="P15289">
    <property type="development level" value="Tbio"/>
</dbReference>
<dbReference type="PRO" id="PR:P15289"/>
<dbReference type="Proteomes" id="UP000005640">
    <property type="component" value="Chromosome 22"/>
</dbReference>
<dbReference type="RNAct" id="P15289">
    <property type="molecule type" value="protein"/>
</dbReference>
<dbReference type="Bgee" id="ENSG00000100299">
    <property type="expression patterns" value="Expressed in right uterine tube and 103 other cell types or tissues"/>
</dbReference>
<dbReference type="ExpressionAtlas" id="P15289">
    <property type="expression patterns" value="baseline and differential"/>
</dbReference>
<dbReference type="GO" id="GO:0035578">
    <property type="term" value="C:azurophil granule lumen"/>
    <property type="evidence" value="ECO:0000304"/>
    <property type="project" value="Reactome"/>
</dbReference>
<dbReference type="GO" id="GO:0005788">
    <property type="term" value="C:endoplasmic reticulum lumen"/>
    <property type="evidence" value="ECO:0000304"/>
    <property type="project" value="Reactome"/>
</dbReference>
<dbReference type="GO" id="GO:0070062">
    <property type="term" value="C:extracellular exosome"/>
    <property type="evidence" value="ECO:0007005"/>
    <property type="project" value="UniProtKB"/>
</dbReference>
<dbReference type="GO" id="GO:0005576">
    <property type="term" value="C:extracellular region"/>
    <property type="evidence" value="ECO:0000304"/>
    <property type="project" value="Reactome"/>
</dbReference>
<dbReference type="GO" id="GO:0043202">
    <property type="term" value="C:lysosomal lumen"/>
    <property type="evidence" value="ECO:0000304"/>
    <property type="project" value="Reactome"/>
</dbReference>
<dbReference type="GO" id="GO:0005764">
    <property type="term" value="C:lysosome"/>
    <property type="evidence" value="ECO:0000304"/>
    <property type="project" value="ProtInc"/>
</dbReference>
<dbReference type="GO" id="GO:0004065">
    <property type="term" value="F:arylsulfatase activity"/>
    <property type="evidence" value="ECO:0000318"/>
    <property type="project" value="GO_Central"/>
</dbReference>
<dbReference type="GO" id="GO:0005509">
    <property type="term" value="F:calcium ion binding"/>
    <property type="evidence" value="ECO:0000314"/>
    <property type="project" value="UniProtKB"/>
</dbReference>
<dbReference type="GO" id="GO:0004098">
    <property type="term" value="F:cerebroside-sulfatase activity"/>
    <property type="evidence" value="ECO:0007669"/>
    <property type="project" value="UniProtKB-EC"/>
</dbReference>
<dbReference type="GO" id="GO:0008484">
    <property type="term" value="F:sulfuric ester hydrolase activity"/>
    <property type="evidence" value="ECO:0000314"/>
    <property type="project" value="MGI"/>
</dbReference>
<dbReference type="GO" id="GO:0006629">
    <property type="term" value="P:lipid metabolic process"/>
    <property type="evidence" value="ECO:0007669"/>
    <property type="project" value="UniProtKB-KW"/>
</dbReference>
<dbReference type="CDD" id="cd16158">
    <property type="entry name" value="ARSA"/>
    <property type="match status" value="1"/>
</dbReference>
<dbReference type="FunFam" id="3.30.1120.10:FF:000003">
    <property type="entry name" value="Arylsulfatase A"/>
    <property type="match status" value="1"/>
</dbReference>
<dbReference type="FunFam" id="3.40.720.10:FF:000023">
    <property type="entry name" value="Arylsulfatase A"/>
    <property type="match status" value="1"/>
</dbReference>
<dbReference type="Gene3D" id="3.30.1120.10">
    <property type="match status" value="1"/>
</dbReference>
<dbReference type="Gene3D" id="3.40.720.10">
    <property type="entry name" value="Alkaline Phosphatase, subunit A"/>
    <property type="match status" value="1"/>
</dbReference>
<dbReference type="InterPro" id="IPR017850">
    <property type="entry name" value="Alkaline_phosphatase_core_sf"/>
</dbReference>
<dbReference type="InterPro" id="IPR050738">
    <property type="entry name" value="Sulfatase"/>
</dbReference>
<dbReference type="InterPro" id="IPR024607">
    <property type="entry name" value="Sulfatase_CS"/>
</dbReference>
<dbReference type="InterPro" id="IPR000917">
    <property type="entry name" value="Sulfatase_N"/>
</dbReference>
<dbReference type="PANTHER" id="PTHR42693:SF11">
    <property type="entry name" value="ARYLSULFATASE A"/>
    <property type="match status" value="1"/>
</dbReference>
<dbReference type="PANTHER" id="PTHR42693">
    <property type="entry name" value="ARYLSULFATASE FAMILY MEMBER"/>
    <property type="match status" value="1"/>
</dbReference>
<dbReference type="Pfam" id="PF00884">
    <property type="entry name" value="Sulfatase"/>
    <property type="match status" value="1"/>
</dbReference>
<dbReference type="Pfam" id="PF14707">
    <property type="entry name" value="Sulfatase_C"/>
    <property type="match status" value="1"/>
</dbReference>
<dbReference type="SUPFAM" id="SSF53649">
    <property type="entry name" value="Alkaline phosphatase-like"/>
    <property type="match status" value="1"/>
</dbReference>
<dbReference type="PROSITE" id="PS00523">
    <property type="entry name" value="SULFATASE_1"/>
    <property type="match status" value="1"/>
</dbReference>
<dbReference type="PROSITE" id="PS00149">
    <property type="entry name" value="SULFATASE_2"/>
    <property type="match status" value="1"/>
</dbReference>
<keyword id="KW-0002">3D-structure</keyword>
<keyword id="KW-0025">Alternative splicing</keyword>
<keyword id="KW-0106">Calcium</keyword>
<keyword id="KW-0903">Direct protein sequencing</keyword>
<keyword id="KW-0225">Disease variant</keyword>
<keyword id="KW-1015">Disulfide bond</keyword>
<keyword id="KW-0256">Endoplasmic reticulum</keyword>
<keyword id="KW-0325">Glycoprotein</keyword>
<keyword id="KW-0378">Hydrolase</keyword>
<keyword id="KW-0977">Ichthyosis</keyword>
<keyword id="KW-1026">Leukodystrophy</keyword>
<keyword id="KW-0443">Lipid metabolism</keyword>
<keyword id="KW-0458">Lysosome</keyword>
<keyword id="KW-0478">Metachromatic leukodystrophy</keyword>
<keyword id="KW-0479">Metal-binding</keyword>
<keyword id="KW-1267">Proteomics identification</keyword>
<keyword id="KW-1185">Reference proteome</keyword>
<keyword id="KW-0732">Signal</keyword>
<feature type="signal peptide" evidence="14">
    <location>
        <begin position="1"/>
        <end position="18"/>
    </location>
</feature>
<feature type="chain" id="PRO_0000033417" description="Arylsulfatase A">
    <location>
        <begin position="19"/>
        <end position="507"/>
    </location>
</feature>
<feature type="chain" id="PRO_0000033418" description="Arylsulfatase A component B">
    <location>
        <begin position="19"/>
        <end position="444"/>
    </location>
</feature>
<feature type="chain" id="PRO_0000033419" description="Arylsulfatase A component C">
    <location>
        <begin position="448"/>
        <end position="507"/>
    </location>
</feature>
<feature type="active site" description="Nucleophile" evidence="36">
    <location>
        <position position="69"/>
    </location>
</feature>
<feature type="active site" evidence="13">
    <location>
        <position position="125"/>
    </location>
</feature>
<feature type="binding site" evidence="13 61">
    <location>
        <position position="29"/>
    </location>
    <ligand>
        <name>Ca(2+)</name>
        <dbReference type="ChEBI" id="CHEBI:29108"/>
    </ligand>
</feature>
<feature type="binding site" evidence="13 61">
    <location>
        <position position="30"/>
    </location>
    <ligand>
        <name>Ca(2+)</name>
        <dbReference type="ChEBI" id="CHEBI:29108"/>
    </ligand>
</feature>
<feature type="binding site" description="via 3-oxoalanine" evidence="13 61">
    <location>
        <position position="69"/>
    </location>
    <ligand>
        <name>Ca(2+)</name>
        <dbReference type="ChEBI" id="CHEBI:29108"/>
    </ligand>
</feature>
<feature type="binding site" evidence="8">
    <location>
        <position position="123"/>
    </location>
    <ligand>
        <name>substrate</name>
    </ligand>
</feature>
<feature type="binding site" evidence="8">
    <location>
        <position position="150"/>
    </location>
    <ligand>
        <name>substrate</name>
    </ligand>
</feature>
<feature type="binding site" evidence="8">
    <location>
        <position position="229"/>
    </location>
    <ligand>
        <name>substrate</name>
    </ligand>
</feature>
<feature type="binding site" evidence="13 61">
    <location>
        <position position="281"/>
    </location>
    <ligand>
        <name>Ca(2+)</name>
        <dbReference type="ChEBI" id="CHEBI:29108"/>
    </ligand>
</feature>
<feature type="binding site" evidence="13 61">
    <location>
        <position position="282"/>
    </location>
    <ligand>
        <name>Ca(2+)</name>
        <dbReference type="ChEBI" id="CHEBI:29108"/>
    </ligand>
</feature>
<feature type="binding site" evidence="8">
    <location>
        <position position="302"/>
    </location>
    <ligand>
        <name>substrate</name>
    </ligand>
</feature>
<feature type="modified residue" description="3-oxoalanine (Cys)" evidence="36 50">
    <location>
        <position position="69"/>
    </location>
</feature>
<feature type="glycosylation site" description="N-linked (GlcNAc...) asparagine" evidence="13 29 61">
    <location>
        <position position="158"/>
    </location>
</feature>
<feature type="glycosylation site" description="N-linked (GlcNAc...) asparagine" evidence="13 61">
    <location>
        <position position="184"/>
    </location>
</feature>
<feature type="glycosylation site" description="N-linked (GlcNAc...) asparagine" evidence="29">
    <location>
        <position position="350"/>
    </location>
</feature>
<feature type="disulfide bond" evidence="13 61">
    <location>
        <begin position="156"/>
        <end position="172"/>
    </location>
</feature>
<feature type="disulfide bond" evidence="13 61">
    <location>
        <begin position="161"/>
        <end position="168"/>
    </location>
</feature>
<feature type="disulfide bond" evidence="13 61">
    <location>
        <begin position="300"/>
        <end position="414"/>
    </location>
</feature>
<feature type="disulfide bond" evidence="13 61">
    <location>
        <begin position="488"/>
        <end position="500"/>
    </location>
</feature>
<feature type="disulfide bond" evidence="13 61">
    <location>
        <begin position="489"/>
        <end position="502"/>
    </location>
</feature>
<feature type="disulfide bond" evidence="13 61">
    <location>
        <begin position="493"/>
        <end position="499"/>
    </location>
</feature>
<feature type="splice variant" id="VSP_046190" description="In isoform 2." evidence="58">
    <location>
        <begin position="1"/>
        <end position="84"/>
    </location>
</feature>
<feature type="sequence variant" id="VAR_054164" description="In MLD; enzyme activity reduced to 5% of wild-type enzyme; dbSNP:rs199476339." evidence="28">
    <original>A</original>
    <variation>D</variation>
    <location>
        <position position="18"/>
    </location>
</feature>
<feature type="sequence variant" id="VAR_054165" description="In MLD; infantile-onset; causes a severe reduction of enzyme activity; dbSNP:rs199476346." evidence="21">
    <original>D</original>
    <variation>N</variation>
    <location>
        <position position="29"/>
    </location>
</feature>
<feature type="sequence variant" id="VAR_054166" description="In MLD; enzyme activity reduced to 2.4% of wild-type enzyme; dbSNP:rs199476340." evidence="28">
    <original>D</original>
    <variation>H</variation>
    <location>
        <position position="30"/>
    </location>
</feature>
<feature type="sequence variant" id="VAR_054167" description="In MLD; late-infantile form; dbSNP:rs199476350." evidence="3">
    <original>G</original>
    <variation>S</variation>
    <location>
        <position position="32"/>
    </location>
</feature>
<feature type="sequence variant" id="VAR_067414" description="In MLD; loss of enzymatic activity; dbSNP:rs199476357." evidence="30">
    <original>L</original>
    <variation>P</variation>
    <location>
        <position position="52"/>
    </location>
</feature>
<feature type="sequence variant" id="VAR_054168" description="In MLD; late-infantile form; dbSNP:rs199476351." evidence="3">
    <original>L</original>
    <variation>P</variation>
    <location>
        <position position="68"/>
    </location>
</feature>
<feature type="sequence variant" id="VAR_007243" description="In dbSNP:rs199476362." evidence="56">
    <original>L</original>
    <variation>P</variation>
    <location>
        <position position="76"/>
    </location>
</feature>
<feature type="sequence variant" id="VAR_007244" description="In MLD; late-infantile-onset; dbSNP:rs6151411." evidence="35 57">
    <original>P</original>
    <variation>L</variation>
    <location>
        <position position="82"/>
    </location>
</feature>
<feature type="sequence variant" id="VAR_007245" description="In MLD; mild; dbSNP:rs74315458." evidence="15 28">
    <original>R</original>
    <variation>Q</variation>
    <location>
        <position position="84"/>
    </location>
</feature>
<feature type="sequence variant" id="VAR_054169" description="In MLD; juvenile form; dbSNP:rs199476352." evidence="3">
    <original>R</original>
    <variation>W</variation>
    <location>
        <position position="84"/>
    </location>
</feature>
<feature type="sequence variant" id="VAR_007246" description="In MLD; severe; no enzyme residual activity; leads to a decreased stability of the mutant enzyme; causes an arrest of the mutant enzyme polypeptide in a prelysosomal compartment; dbSNP:rs74315460." evidence="5 37">
    <original>G</original>
    <variation>D</variation>
    <location>
        <position position="86"/>
    </location>
</feature>
<feature type="sequence variant" id="VAR_054170" description="In MLD; adult form; dbSNP:rs199476353." evidence="3">
    <original>P</original>
    <variation>A</variation>
    <location>
        <position position="94"/>
    </location>
</feature>
<feature type="sequence variant" id="VAR_007247" description="In MLD; dbSNP:rs199476363." evidence="48">
    <original>S</original>
    <variation>N</variation>
    <location>
        <position position="95"/>
    </location>
</feature>
<feature type="sequence variant" id="VAR_007248" description="In MLD; severe; dbSNP:rs74315456." evidence="27">
    <original>S</original>
    <variation>F</variation>
    <location>
        <position position="96"/>
    </location>
</feature>
<feature type="sequence variant" id="VAR_007249" description="In MLD; severe; no enzyme residual activity; dbSNP:rs199476371." evidence="37">
    <original>S</original>
    <variation>L</variation>
    <location>
        <position position="96"/>
    </location>
</feature>
<feature type="sequence variant" id="VAR_007250" description="In MLD; adult type; dbSNP:rs74315455." evidence="26 32">
    <original>G</original>
    <variation>D</variation>
    <location>
        <position position="99"/>
    </location>
</feature>
<feature type="sequence variant" id="VAR_054171" description="In MLD; late-infantile form; dbSNP:rs74315455." evidence="3">
    <original>G</original>
    <variation>V</variation>
    <location>
        <position position="99"/>
    </location>
</feature>
<feature type="sequence variant" id="VAR_007251" description="In MLD; juvenile-onset; dbSNP:rs199476364." evidence="48">
    <original>G</original>
    <variation>R</variation>
    <location>
        <position position="119"/>
    </location>
</feature>
<feature type="sequence variant" id="VAR_007252" description="In MLD; adult type; dbSNP:rs74315461." evidence="39">
    <original>G</original>
    <variation>S</variation>
    <location>
        <position position="122"/>
    </location>
</feature>
<feature type="sequence variant" id="VAR_007253" description="In MLD; dbSNP:rs121434215." evidence="53">
    <original>L</original>
    <variation>P</variation>
    <location>
        <position position="135"/>
    </location>
</feature>
<feature type="sequence variant" id="VAR_007254" description="In MLD; severe late-infantile type; loss of enzymatic activity; dbSNP:rs74315462." evidence="38">
    <original>P</original>
    <variation>L</variation>
    <location>
        <position position="136"/>
    </location>
</feature>
<feature type="sequence variant" id="VAR_054172" description="In MLD; late-infantile form; dbSNP:rs60504011." evidence="3 17">
    <original>P</original>
    <variation>S</variation>
    <location>
        <position position="136"/>
    </location>
</feature>
<feature type="sequence variant" id="VAR_054173" description="In MLD." evidence="28">
    <location>
        <position position="137"/>
    </location>
</feature>
<feature type="sequence variant" id="VAR_067415" description="In MLD; significantly lower activity than wild-type protein; dbSNP:rs199476358." evidence="30">
    <original>H</original>
    <variation>D</variation>
    <location>
        <position position="138"/>
    </location>
</feature>
<feature type="sequence variant" id="VAR_054174" description="In MLD; juvenile/adult-onset; generates 5% as much activity as the parallel normal control; dbSNP:rs199476373." evidence="6">
    <original>R</original>
    <variation>G</variation>
    <location>
        <position position="143"/>
    </location>
</feature>
<feature type="sequence variant" id="VAR_054175" description="In MLD; juvenile-onset; dbSNP:rs199476375." evidence="2">
    <original>P</original>
    <variation>L</variation>
    <location>
        <position position="148"/>
    </location>
</feature>
<feature type="sequence variant" id="VAR_007255" description="In MLD; dbSNP:rs199476365." evidence="48">
    <original>D</original>
    <variation>Y</variation>
    <location>
        <position position="152"/>
    </location>
</feature>
<feature type="sequence variant" id="VAR_054176" description="In MLD; late-infantile form; no enzyme residual activity; dbSNP:rs199476377." evidence="47">
    <original>Q</original>
    <variation>H</variation>
    <location>
        <position position="153"/>
    </location>
</feature>
<feature type="sequence variant" id="VAR_007256" description="In MLD; dbSNP:rs74315463." evidence="28">
    <original>G</original>
    <variation>D</variation>
    <location>
        <position position="154"/>
    </location>
</feature>
<feature type="sequence variant" id="VAR_054177" description="In MLD; juvenile-onset; dbSNP:rs74315464." evidence="16">
    <original>P</original>
    <variation>L</variation>
    <location>
        <position position="155"/>
    </location>
</feature>
<feature type="sequence variant" id="VAR_007257" description="In MLD; dbSNP:rs74315464.">
    <original>P</original>
    <variation>R</variation>
    <location>
        <position position="155"/>
    </location>
</feature>
<feature type="sequence variant" id="VAR_054178" description="In MLD; adult type; enzyme activity reduced to 50% of wild-type enzyme; dbSNP:rs199476348." evidence="21">
    <original>C</original>
    <variation>R</variation>
    <location>
        <position position="156"/>
    </location>
</feature>
<feature type="sequence variant" id="VAR_007258" description="In MLD; dbSNP:rs74315465.">
    <original>P</original>
    <variation>R</variation>
    <location>
        <position position="167"/>
    </location>
</feature>
<feature type="sequence variant" id="VAR_007259" description="In MLD; dbSNP:rs74315466.">
    <original>D</original>
    <variation>N</variation>
    <location>
        <position position="169"/>
    </location>
</feature>
<feature type="sequence variant" id="VAR_007260" description="In MLD; juvenile-onset; dbSNP:rs199476381." evidence="35">
    <original>C</original>
    <variation>Y</variation>
    <location>
        <position position="172"/>
    </location>
</feature>
<feature type="sequence variant" id="VAR_007261" description="In MLD; mild; dbSNP:rs74315457." evidence="4 21 28 31 53">
    <original>I</original>
    <variation>S</variation>
    <location>
        <position position="179"/>
    </location>
</feature>
<feature type="sequence variant" id="VAR_054179" description="In MLD; infantile form; dbSNP:rs199476378." evidence="16">
    <original>L</original>
    <variation>Q</variation>
    <location>
        <position position="181"/>
    </location>
</feature>
<feature type="sequence variant" id="VAR_054180" description="In MLD; no enzyme residual activity; dbSNP:rs199476372." evidence="37">
    <original>Q</original>
    <variation>H</variation>
    <location>
        <position position="190"/>
    </location>
</feature>
<feature type="sequence variant" id="VAR_054181" description="In MLD; juvenile-onset; dbSNP:rs199476374." evidence="2">
    <original>P</original>
    <variation>T</variation>
    <location>
        <position position="191"/>
    </location>
</feature>
<feature type="sequence variant" id="VAR_007262" description="In dbSNP:rs6151415." evidence="3 9 21 25 56 57">
    <original>W</original>
    <variation>C</variation>
    <location>
        <position position="193"/>
    </location>
</feature>
<feature type="sequence variant" id="VAR_007263" description="In MLD; juvenile-onset; results in highly reduced enzyme activity and stability; the mutant enzyme is kept in a prelysosomal compartment; dbSNP:rs199476345." evidence="5 28 35">
    <original>Y</original>
    <variation>C</variation>
    <location>
        <position position="201"/>
    </location>
</feature>
<feature type="sequence variant" id="VAR_054182" description="In MLD; loss of enzymatic activity; dbSNP:rs199476341." evidence="28 30">
    <original>A</original>
    <variation>P</variation>
    <location>
        <position position="212"/>
    </location>
</feature>
<feature type="sequence variant" id="VAR_007264" description="In MLD; dbSNP:rs74315467." evidence="3 16 40">
    <original>A</original>
    <variation>V</variation>
    <location>
        <position position="212"/>
    </location>
</feature>
<feature type="sequence variant" id="VAR_054183" description="In MLD; enzyme activity reduced to 15.6% of wild-type enzyme; dbSNP:rs148403406." evidence="28">
    <original>R</original>
    <variation>H</variation>
    <location>
        <position position="217"/>
    </location>
</feature>
<feature type="sequence variant" id="VAR_054184" description="In MLD; enzyme activity reduced to less than 1% of normal activity; dbSNP:rs199476383." evidence="23">
    <original>F</original>
    <variation>V</variation>
    <location>
        <position position="219"/>
    </location>
</feature>
<feature type="sequence variant" id="VAR_007265" description="In MLD; dbSNP:rs74315468." evidence="40">
    <original>A</original>
    <variation>V</variation>
    <location>
        <position position="224"/>
    </location>
</feature>
<feature type="sequence variant" id="VAR_054185" description="In MLD; late-infantile form; dbSNP:rs199476354." evidence="3">
    <original>H</original>
    <variation>Y</variation>
    <location>
        <position position="227"/>
    </location>
</feature>
<feature type="sequence variant" id="VAR_007266" description="In MLD; dbSNP:rs74315469.">
    <original>P</original>
    <variation>T</variation>
    <location>
        <position position="231"/>
    </location>
</feature>
<feature type="sequence variant" id="VAR_007267" description="In MLD; juvenile-onset; dbSNP:rs74315470.">
    <original>R</original>
    <variation>C</variation>
    <location>
        <position position="244"/>
    </location>
</feature>
<feature type="sequence variant" id="VAR_007268" description="In MLD; infantile-onset; dbSNP:rs199476366." evidence="48">
    <original>R</original>
    <variation>H</variation>
    <location>
        <position position="244"/>
    </location>
</feature>
<feature type="sequence variant" id="VAR_007269" description="In MLD; severe; dbSNP:rs74315471." evidence="44">
    <original>G</original>
    <variation>R</variation>
    <location>
        <position position="245"/>
    </location>
</feature>
<feature type="sequence variant" id="VAR_054186" description="In MLD; dbSNP:rs199476384." evidence="17 31">
    <original>F</original>
    <variation>S</variation>
    <location>
        <position position="247"/>
    </location>
</feature>
<feature type="sequence variant" id="VAR_007270" description="In MLD; infantile-onset; dbSNP:rs199476367." evidence="48">
    <original>S</original>
    <variation>Y</variation>
    <location>
        <position position="250"/>
    </location>
</feature>
<feature type="sequence variant" id="VAR_054187" description="In MLD; late-infantile; decreased enzymatic activity; dbSNP:rs74315483." evidence="10 28">
    <original>E</original>
    <variation>K</variation>
    <location>
        <position position="253"/>
    </location>
</feature>
<feature type="sequence variant" id="VAR_054188" description="In MLD; late-infantile form; no enzyme residual activity; leads to a decreased stability of the mutant enzyme; causes an arrest of the mutant enzyme polypeptide in a prelysosomal compartment; dbSNP:rs80338819." evidence="3 5">
    <original>D</original>
    <variation>H</variation>
    <location>
        <position position="255"/>
    </location>
</feature>
<feature type="sequence variant" id="VAR_007271" description="In MLD; severe; 35% of normal activity; dbSNP:rs74315472." evidence="37 45 46">
    <original>T</original>
    <variation>M</variation>
    <location>
        <position position="274"/>
    </location>
</feature>
<feature type="sequence variant" id="VAR_054189" description="In MLD; dbSNP:rs199476386." evidence="4">
    <original>D</original>
    <variation>Y</variation>
    <location>
        <position position="281"/>
    </location>
</feature>
<feature type="sequence variant" id="VAR_054190" description="In MLD; enzyme activity reduced to 0.6% of wild-type enzyme; dbSNP:rs199476342." evidence="28">
    <original>N</original>
    <variation>S</variation>
    <location>
        <position position="282"/>
    </location>
</feature>
<feature type="sequence variant" id="VAR_054191" description="In MLD; adult type; dbSNP:rs28940894." evidence="7">
    <original>T</original>
    <variation>P</variation>
    <location>
        <position position="286"/>
    </location>
</feature>
<feature type="sequence variant" id="VAR_007272" description="In MLD; dbSNP:rs74315473." evidence="31">
    <original>R</original>
    <variation>C</variation>
    <location>
        <position position="288"/>
    </location>
</feature>
<feature type="sequence variant" id="VAR_054192" description="In MLD; adult form; dbSNP:rs199476355." evidence="3">
    <original>R</original>
    <variation>H</variation>
    <location>
        <position position="288"/>
    </location>
</feature>
<feature type="sequence variant" id="VAR_054193" description="In MLD; late-onset; dbSNP:rs199476387." evidence="19">
    <original>G</original>
    <variation>D</variation>
    <location>
        <position position="293"/>
    </location>
</feature>
<feature type="sequence variant" id="VAR_054194" description="In MLD; adult type; causes a severe reduction of enzyme activity; dbSNP:rs199476349." evidence="21">
    <original>G</original>
    <variation>S</variation>
    <location>
        <position position="293"/>
    </location>
</feature>
<feature type="sequence variant" id="VAR_054195" description="In MLD; juvenile-onset; causes a severe reduction of enzyme activity; dbSNP:rs199476347." evidence="21">
    <original>C</original>
    <variation>Y</variation>
    <location>
        <position position="294"/>
    </location>
</feature>
<feature type="sequence variant" id="VAR_007273" description="In MLD; severe; dbSNP:rs74315474." evidence="40">
    <original>S</original>
    <variation>Y</variation>
    <location>
        <position position="295"/>
    </location>
</feature>
<feature type="sequence variant" id="VAR_054196" description="In MLD; late-infantile form; complete loss of enzyme activity; dbSNP:rs199476389." evidence="55">
    <original>L</original>
    <variation>S</variation>
    <location>
        <position position="298"/>
    </location>
</feature>
<feature type="sequence variant" id="VAR_008132" description="In MLD; late-infantile-onset; enzyme activity reduced to less than 1%; the mutant protein is more rapidly degraded in lysosomes; strongly interferes with the octamerization process of the enzyme at low pH; dbSNP:rs74315484." evidence="1 11 12">
    <original>C</original>
    <variation>F</variation>
    <location>
        <position position="300"/>
    </location>
</feature>
<feature type="sequence variant" id="VAR_054197" description="In MLD; enzyme activity reduced to 2.8% of wild-type enzyme; dbSNP:rs199476343." evidence="28">
    <original>K</original>
    <variation>N</variation>
    <location>
        <position position="302"/>
    </location>
</feature>
<feature type="sequence variant" id="VAR_067416" description="In MLD; loss of enzymatic activity; dbSNP:rs199476359." evidence="30">
    <original>T</original>
    <variation>M</variation>
    <location>
        <position position="304"/>
    </location>
</feature>
<feature type="sequence variant" id="VAR_054198" description="In MLD; juvenile-onset; dbSNP:rs199476379." evidence="16">
    <original>Y</original>
    <variation>H</variation>
    <location>
        <position position="306"/>
    </location>
</feature>
<feature type="sequence variant" id="VAR_067417" description="In MLD; loss of enzymatic activity; dbSNP:rs199476360." evidence="30">
    <original>E</original>
    <variation>K</variation>
    <location>
        <position position="307"/>
    </location>
</feature>
<feature type="sequence variant" id="VAR_054199" description="In MLD; late-infantile form; dbSNP:rs199476356." evidence="3">
    <original>G</original>
    <variation>D</variation>
    <location>
        <position position="308"/>
    </location>
</feature>
<feature type="sequence variant" id="VAR_054200" description="In MLD; late-infantile form; no enzyme residual activity; dbSNP:rs199476356." evidence="47">
    <original>G</original>
    <variation>V</variation>
    <location>
        <position position="308"/>
    </location>
</feature>
<feature type="sequence variant" id="VAR_007274" description="In MLD; severe; 13% of normal activity; dbSNP:rs74315459." evidence="21 43">
    <original>G</original>
    <variation>S</variation>
    <location>
        <position position="309"/>
    </location>
</feature>
<feature type="sequence variant" id="VAR_007275" description="In MLD; juvenile-onset; dbSNP:rs199476382." evidence="35">
    <original>R</original>
    <variation>Q</variation>
    <location>
        <position position="311"/>
    </location>
</feature>
<feature type="sequence variant" id="VAR_054201" description="In MLD; low amounts of residual enzyme activity; leads to a decreased stability of the mutant enzyme; dbSNP:rs199476390." evidence="5">
    <original>E</original>
    <variation>D</variation>
    <location>
        <position position="312"/>
    </location>
</feature>
<feature type="sequence variant" id="VAR_007276" description="In MLD; infantile-onset; dbSNP:rs199476368." evidence="48">
    <original>A</original>
    <variation>T</variation>
    <location>
        <position position="314"/>
    </location>
</feature>
<feature type="sequence variant" id="VAR_054202" description="In MLD; juvenile-onset; dbSNP:rs148092995." evidence="16">
    <original>G</original>
    <variation>S</variation>
    <location>
        <position position="325"/>
    </location>
</feature>
<feature type="sequence variant" id="VAR_054203" description="In MLD; late-infantile form." evidence="3">
    <original>T</original>
    <variation>I</variation>
    <location>
        <position position="327"/>
    </location>
</feature>
<feature type="sequence variant" id="VAR_007277" description="In MLD; late-infantile-onset; loss of enzymatic activity; dbSNP:rs74315475." evidence="2 16 31 35 46">
    <original>D</original>
    <variation>V</variation>
    <location>
        <position position="335"/>
    </location>
</feature>
<feature type="sequence variant" id="VAR_007278" description="Often found in association with a nucleotide substitution in the polyadenylation signal downstream of the stop codon; this association defines an ARSA pseudodeficiency allele found in individuals with low enzymatic activities but no clinical manifestations; no effect on activity; no effect on protein abundance; loss of N-glycosylation; dbSNP:rs2071421." evidence="3 10 19 34 57">
    <original>N</original>
    <variation>S</variation>
    <location>
        <position position="350"/>
    </location>
</feature>
<feature type="sequence variant" id="VAR_018838" description="In dbSNP:rs6151422." evidence="57">
    <original>F</original>
    <variation>V</variation>
    <location>
        <position position="356"/>
    </location>
</feature>
<feature type="sequence variant" id="VAR_007279" description="In MLD; dbSNP:rs199476369." evidence="48">
    <original>K</original>
    <variation>N</variation>
    <location>
        <position position="367"/>
    </location>
</feature>
<feature type="sequence variant" id="VAR_007280" description="In MLD; mild; dbSNP:rs74315477.">
    <original>R</original>
    <variation>Q</variation>
    <location>
        <position position="370"/>
    </location>
</feature>
<feature type="sequence variant" id="VAR_007281" description="In MLD; severe; no enzyme residual activity; dbSNP:rs74315476." evidence="28 37">
    <original>R</original>
    <variation>W</variation>
    <location>
        <position position="370"/>
    </location>
</feature>
<feature type="sequence variant" id="VAR_054204" description="In MLD; enzyme activity reduced to 4.7% of wild-type enzyme; dbSNP:rs199476344." evidence="28">
    <original>Y</original>
    <variation>N</variation>
    <location>
        <position position="376"/>
    </location>
</feature>
<feature type="sequence variant" id="VAR_007282" description="In MLD; severe; dbSNP:rs74315478." evidence="3">
    <original>P</original>
    <variation>L</variation>
    <location>
        <position position="377"/>
    </location>
</feature>
<feature type="sequence variant" id="VAR_054205" description="In MLD; uncertain significance; early-infantile form; dbSNP:rs6151425." evidence="17">
    <original>D</original>
    <variation>E</variation>
    <location>
        <position position="381"/>
    </location>
</feature>
<feature type="sequence variant" id="VAR_007283" description="In MLD; intermediate; dbSNP:rs74315479." evidence="31">
    <original>E</original>
    <variation>K</variation>
    <location>
        <position position="382"/>
    </location>
</feature>
<feature type="sequence variant" id="VAR_007284" description="In MLD; dbSNP:rs199476370." evidence="48">
    <original>R</original>
    <variation>C</variation>
    <location>
        <position position="384"/>
    </location>
</feature>
<feature type="sequence variant" id="VAR_007285" description="In MLD; juvenile-onset; dbSNP:rs199476391." evidence="31 51">
    <original>R</original>
    <variation>Q</variation>
    <location>
        <position position="390"/>
    </location>
</feature>
<feature type="sequence variant" id="VAR_007286" description="In MLD; late-infantile and juvenile-onset; dbSNP:rs74315480." evidence="28 31 35">
    <original>R</original>
    <variation>W</variation>
    <location>
        <position position="390"/>
    </location>
</feature>
<feature type="sequence variant" id="VAR_007287" description="Retains 90% of activity; dbSNP:rs743616." evidence="3 7 9 10 18 21 22 25 56 57">
    <original>T</original>
    <variation>S</variation>
    <location>
        <position position="391"/>
    </location>
</feature>
<feature type="sequence variant" id="VAR_007288" description="In MLD; adult-onset; dbSNP:rs199476376." evidence="2 31 51">
    <original>H</original>
    <variation>Y</variation>
    <location>
        <position position="397"/>
    </location>
</feature>
<feature type="sequence variant" id="VAR_007289" description="In MLD.">
    <location>
        <position position="398"/>
    </location>
</feature>
<feature type="sequence variant" id="VAR_007290" description="In MLD; late-infantile-onset." evidence="52">
    <location>
        <begin position="406"/>
        <end position="408"/>
    </location>
</feature>
<feature type="sequence variant" id="VAR_067418" description="In MLD; loss of enzymatic activity; dbSNP:rs199476361." evidence="30">
    <original>S</original>
    <variation>G</variation>
    <location>
        <position position="406"/>
    </location>
</feature>
<feature type="sequence variant" id="VAR_054206" description="In MLD; adult type; dbSNP:rs28940895." evidence="9">
    <original>T</original>
    <variation>I</variation>
    <location>
        <position position="408"/>
    </location>
</feature>
<feature type="sequence variant" id="VAR_054207" description="In MLD; mild; dbSNP:rs74315481." evidence="32 41">
    <original>T</original>
    <variation>I</variation>
    <location>
        <position position="409"/>
    </location>
</feature>
<feature type="sequence variant" id="VAR_008133" description="In MLD; juvenile-onset; retains about 12% of specific enzyme activity; the mutant protein is unstable; results in more rapid enzyme degradation in lysosomes; addition of the cysteine protease inhibitor leupeptin increases the amount of the enzyme activity; displays a modest reduction in the octamerization process of the enzyme at low pH; dbSNP:rs74315485." evidence="1 11 12">
    <original>P</original>
    <variation>T</variation>
    <location>
        <position position="425"/>
    </location>
</feature>
<feature type="sequence variant" id="VAR_007291" description="In MLD; juvenile/adult-onset; mild; common mutation; decreased enzyme activity; dbSNP:rs28940893." evidence="2 10 16 17 21 25 31 42">
    <original>P</original>
    <variation>L</variation>
    <location>
        <position position="426"/>
    </location>
</feature>
<feature type="sequence variant" id="VAR_054208" description="In MLD; late-infantile form; dbSNP:rs199476392." evidence="28 49">
    <original>L</original>
    <variation>P</variation>
    <location>
        <position position="428"/>
    </location>
</feature>
<feature type="sequence variant" id="VAR_054209" description="In MLD; adult-onset; dbSNP:rs199476380." evidence="16">
    <original>Y</original>
    <variation>S</variation>
    <location>
        <position position="429"/>
    </location>
</feature>
<feature type="sequence variant" id="VAR_018839" description="In dbSNP:rs6151427." evidence="57">
    <original>N</original>
    <variation>S</variation>
    <location>
        <position position="440"/>
    </location>
</feature>
<feature type="sequence variant" id="VAR_007292" evidence="56">
    <original>A</original>
    <variation>V</variation>
    <location>
        <position position="464"/>
    </location>
</feature>
<feature type="sequence variant" id="VAR_054210" description="In MLD; early-infantile form; dbSNP:rs199476385." evidence="17">
    <original>A</original>
    <variation>G</variation>
    <location>
        <position position="469"/>
    </location>
</feature>
<feature type="sequence variant" id="VAR_054211" description="In MLD; late-onset; dbSNP:rs199476388." evidence="19">
    <original>C</original>
    <variation>G</variation>
    <location>
        <position position="489"/>
    </location>
</feature>
<feature type="sequence variant" id="VAR_007293" description="In dbSNP:rs6151428." evidence="48 54 57">
    <original>R</original>
    <variation>H</variation>
    <location>
        <position position="496"/>
    </location>
</feature>
<feature type="mutagenesis site" description="Strongly reduces formation of 3-oxoalanine (also known as C-formylglycine, FGly)." evidence="50">
    <original>CT</original>
    <variation>TC</variation>
    <location>
        <begin position="69"/>
        <end position="70"/>
    </location>
</feature>
<feature type="mutagenesis site" description="Abolishes enzyme activity." evidence="8">
    <original>C</original>
    <variation>A</variation>
    <location>
        <position position="69"/>
    </location>
</feature>
<feature type="mutagenesis site" description="Abolishes formation of 3-oxoalanine (also known as C-formylglycine, FGly). Strongly decreases enzyme activity." evidence="8 50">
    <original>C</original>
    <variation>S</variation>
    <location>
        <position position="69"/>
    </location>
</feature>
<feature type="sequence conflict" description="In Ref. 5; AK098659." evidence="59" ref="5">
    <original>S</original>
    <variation>P</variation>
    <location>
        <position position="290"/>
    </location>
</feature>
<feature type="strand" evidence="62">
    <location>
        <begin position="22"/>
        <end position="30"/>
    </location>
</feature>
<feature type="helix" evidence="62">
    <location>
        <begin position="37"/>
        <end position="39"/>
    </location>
</feature>
<feature type="helix" evidence="62">
    <location>
        <begin position="47"/>
        <end position="54"/>
    </location>
</feature>
<feature type="strand" evidence="62">
    <location>
        <begin position="56"/>
        <end position="63"/>
    </location>
</feature>
<feature type="strand" evidence="62">
    <location>
        <begin position="65"/>
        <end position="68"/>
    </location>
</feature>
<feature type="helix" evidence="62">
    <location>
        <begin position="69"/>
        <end position="78"/>
    </location>
</feature>
<feature type="helix" evidence="62">
    <location>
        <begin position="82"/>
        <end position="85"/>
    </location>
</feature>
<feature type="helix" evidence="62">
    <location>
        <begin position="107"/>
        <end position="112"/>
    </location>
</feature>
<feature type="turn" evidence="62">
    <location>
        <begin position="113"/>
        <end position="115"/>
    </location>
</feature>
<feature type="strand" evidence="62">
    <location>
        <begin position="117"/>
        <end position="122"/>
    </location>
</feature>
<feature type="helix" evidence="62">
    <location>
        <begin position="130"/>
        <end position="132"/>
    </location>
</feature>
<feature type="helix" evidence="62">
    <location>
        <begin position="136"/>
        <end position="139"/>
    </location>
</feature>
<feature type="strand" evidence="62">
    <location>
        <begin position="142"/>
        <end position="146"/>
    </location>
</feature>
<feature type="strand" evidence="62">
    <location>
        <begin position="153"/>
        <end position="155"/>
    </location>
</feature>
<feature type="strand" evidence="62">
    <location>
        <begin position="159"/>
        <end position="162"/>
    </location>
</feature>
<feature type="turn" evidence="62">
    <location>
        <begin position="163"/>
        <end position="165"/>
    </location>
</feature>
<feature type="strand" evidence="62">
    <location>
        <begin position="181"/>
        <end position="183"/>
    </location>
</feature>
<feature type="strand" evidence="62">
    <location>
        <begin position="186"/>
        <end position="191"/>
    </location>
</feature>
<feature type="helix" evidence="62">
    <location>
        <begin position="194"/>
        <end position="196"/>
    </location>
</feature>
<feature type="helix" evidence="62">
    <location>
        <begin position="197"/>
        <end position="214"/>
    </location>
</feature>
<feature type="strand" evidence="62">
    <location>
        <begin position="219"/>
        <end position="224"/>
    </location>
</feature>
<feature type="strand" evidence="62">
    <location>
        <begin position="229"/>
        <end position="231"/>
    </location>
</feature>
<feature type="turn" evidence="62">
    <location>
        <begin position="236"/>
        <end position="241"/>
    </location>
</feature>
<feature type="strand" evidence="62">
    <location>
        <begin position="242"/>
        <end position="244"/>
    </location>
</feature>
<feature type="helix" evidence="62">
    <location>
        <begin position="245"/>
        <end position="267"/>
    </location>
</feature>
<feature type="helix" evidence="62">
    <location>
        <begin position="271"/>
        <end position="273"/>
    </location>
</feature>
<feature type="strand" evidence="62">
    <location>
        <begin position="274"/>
        <end position="282"/>
    </location>
</feature>
<feature type="helix" evidence="62">
    <location>
        <begin position="286"/>
        <end position="291"/>
    </location>
</feature>
<feature type="strand" evidence="62">
    <location>
        <begin position="304"/>
        <end position="306"/>
    </location>
</feature>
<feature type="helix" evidence="62">
    <location>
        <begin position="307"/>
        <end position="310"/>
    </location>
</feature>
<feature type="strand" evidence="62">
    <location>
        <begin position="315"/>
        <end position="317"/>
    </location>
</feature>
<feature type="turn" evidence="62">
    <location>
        <begin position="319"/>
        <end position="321"/>
    </location>
</feature>
<feature type="strand" evidence="62">
    <location>
        <begin position="324"/>
        <end position="327"/>
    </location>
</feature>
<feature type="helix" evidence="62">
    <location>
        <begin position="333"/>
        <end position="335"/>
    </location>
</feature>
<feature type="helix" evidence="62">
    <location>
        <begin position="336"/>
        <end position="343"/>
    </location>
</feature>
<feature type="helix" evidence="62">
    <location>
        <begin position="359"/>
        <end position="363"/>
    </location>
</feature>
<feature type="strand" evidence="62">
    <location>
        <begin position="372"/>
        <end position="375"/>
    </location>
</feature>
<feature type="turn" evidence="62">
    <location>
        <begin position="382"/>
        <end position="384"/>
    </location>
</feature>
<feature type="strand" evidence="62">
    <location>
        <begin position="387"/>
        <end position="391"/>
    </location>
</feature>
<feature type="strand" evidence="62">
    <location>
        <begin position="394"/>
        <end position="400"/>
    </location>
</feature>
<feature type="helix" evidence="62">
    <location>
        <begin position="404"/>
        <end position="406"/>
    </location>
</feature>
<feature type="strand" evidence="63">
    <location>
        <begin position="408"/>
        <end position="410"/>
    </location>
</feature>
<feature type="helix" evidence="62">
    <location>
        <begin position="412"/>
        <end position="414"/>
    </location>
</feature>
<feature type="strand" evidence="62">
    <location>
        <begin position="421"/>
        <end position="430"/>
    </location>
</feature>
<feature type="turn" evidence="62">
    <location>
        <begin position="431"/>
        <end position="433"/>
    </location>
</feature>
<feature type="helix" evidence="62">
    <location>
        <begin position="450"/>
        <end position="469"/>
    </location>
</feature>
<feature type="helix" evidence="62">
    <location>
        <begin position="477"/>
        <end position="479"/>
    </location>
</feature>
<feature type="helix" evidence="62">
    <location>
        <begin position="483"/>
        <end position="485"/>
    </location>
</feature>
<feature type="turn" evidence="62">
    <location>
        <begin position="496"/>
        <end position="499"/>
    </location>
</feature>
<gene>
    <name type="primary">ARSA</name>
</gene>
<reference key="1">
    <citation type="journal article" date="1989" name="J. Biol. Chem.">
        <title>Cloning and expression of human arylsulfatase A.</title>
        <authorList>
            <person name="Stein C."/>
            <person name="Gieselmann V."/>
            <person name="Kreysing J."/>
            <person name="Schmidt B."/>
            <person name="Pohlmann R."/>
            <person name="Waheed A."/>
            <person name="Meyer H.E."/>
            <person name="O'Brien J.S."/>
            <person name="von Figura K."/>
        </authorList>
    </citation>
    <scope>NUCLEOTIDE SEQUENCE [MRNA] (ISOFORM 1)</scope>
</reference>
<reference key="2">
    <citation type="journal article" date="1990" name="Eur. J. Biochem.">
        <title>Structure of the arylsulfatase A gene.</title>
        <authorList>
            <person name="Kreysing J."/>
            <person name="von Figura K."/>
            <person name="Gieselmann V."/>
        </authorList>
    </citation>
    <scope>NUCLEOTIDE SEQUENCE [GENOMIC DNA]</scope>
</reference>
<reference key="3">
    <citation type="journal article" date="2009" name="Mol. Vis.">
        <title>Characterization of the arylsulfatase I (ARSI) gene preferentially expressed in the human retinal pigment epithelium cell line ARPE-19.</title>
        <authorList>
            <person name="Oshikawa M."/>
            <person name="Usami R."/>
            <person name="Kato S."/>
        </authorList>
    </citation>
    <scope>NUCLEOTIDE SEQUENCE [MRNA] (ISOFORM 1)</scope>
</reference>
<reference key="4">
    <citation type="journal article" date="2004" name="Genome Biol.">
        <title>A genome annotation-driven approach to cloning the human ORFeome.</title>
        <authorList>
            <person name="Collins J.E."/>
            <person name="Wright C.L."/>
            <person name="Edwards C.A."/>
            <person name="Davis M.P."/>
            <person name="Grinham J.A."/>
            <person name="Cole C.G."/>
            <person name="Goward M.E."/>
            <person name="Aguado B."/>
            <person name="Mallya M."/>
            <person name="Mokrab Y."/>
            <person name="Huckle E.J."/>
            <person name="Beare D.M."/>
            <person name="Dunham I."/>
        </authorList>
    </citation>
    <scope>NUCLEOTIDE SEQUENCE [LARGE SCALE MRNA] (ISOFORM 1)</scope>
</reference>
<reference key="5">
    <citation type="journal article" date="2004" name="Nat. Genet.">
        <title>Complete sequencing and characterization of 21,243 full-length human cDNAs.</title>
        <authorList>
            <person name="Ota T."/>
            <person name="Suzuki Y."/>
            <person name="Nishikawa T."/>
            <person name="Otsuki T."/>
            <person name="Sugiyama T."/>
            <person name="Irie R."/>
            <person name="Wakamatsu A."/>
            <person name="Hayashi K."/>
            <person name="Sato H."/>
            <person name="Nagai K."/>
            <person name="Kimura K."/>
            <person name="Makita H."/>
            <person name="Sekine M."/>
            <person name="Obayashi M."/>
            <person name="Nishi T."/>
            <person name="Shibahara T."/>
            <person name="Tanaka T."/>
            <person name="Ishii S."/>
            <person name="Yamamoto J."/>
            <person name="Saito K."/>
            <person name="Kawai Y."/>
            <person name="Isono Y."/>
            <person name="Nakamura Y."/>
            <person name="Nagahari K."/>
            <person name="Murakami K."/>
            <person name="Yasuda T."/>
            <person name="Iwayanagi T."/>
            <person name="Wagatsuma M."/>
            <person name="Shiratori A."/>
            <person name="Sudo H."/>
            <person name="Hosoiri T."/>
            <person name="Kaku Y."/>
            <person name="Kodaira H."/>
            <person name="Kondo H."/>
            <person name="Sugawara M."/>
            <person name="Takahashi M."/>
            <person name="Kanda K."/>
            <person name="Yokoi T."/>
            <person name="Furuya T."/>
            <person name="Kikkawa E."/>
            <person name="Omura Y."/>
            <person name="Abe K."/>
            <person name="Kamihara K."/>
            <person name="Katsuta N."/>
            <person name="Sato K."/>
            <person name="Tanikawa M."/>
            <person name="Yamazaki M."/>
            <person name="Ninomiya K."/>
            <person name="Ishibashi T."/>
            <person name="Yamashita H."/>
            <person name="Murakawa K."/>
            <person name="Fujimori K."/>
            <person name="Tanai H."/>
            <person name="Kimata M."/>
            <person name="Watanabe M."/>
            <person name="Hiraoka S."/>
            <person name="Chiba Y."/>
            <person name="Ishida S."/>
            <person name="Ono Y."/>
            <person name="Takiguchi S."/>
            <person name="Watanabe S."/>
            <person name="Yosida M."/>
            <person name="Hotuta T."/>
            <person name="Kusano J."/>
            <person name="Kanehori K."/>
            <person name="Takahashi-Fujii A."/>
            <person name="Hara H."/>
            <person name="Tanase T.-O."/>
            <person name="Nomura Y."/>
            <person name="Togiya S."/>
            <person name="Komai F."/>
            <person name="Hara R."/>
            <person name="Takeuchi K."/>
            <person name="Arita M."/>
            <person name="Imose N."/>
            <person name="Musashino K."/>
            <person name="Yuuki H."/>
            <person name="Oshima A."/>
            <person name="Sasaki N."/>
            <person name="Aotsuka S."/>
            <person name="Yoshikawa Y."/>
            <person name="Matsunawa H."/>
            <person name="Ichihara T."/>
            <person name="Shiohata N."/>
            <person name="Sano S."/>
            <person name="Moriya S."/>
            <person name="Momiyama H."/>
            <person name="Satoh N."/>
            <person name="Takami S."/>
            <person name="Terashima Y."/>
            <person name="Suzuki O."/>
            <person name="Nakagawa S."/>
            <person name="Senoh A."/>
            <person name="Mizoguchi H."/>
            <person name="Goto Y."/>
            <person name="Shimizu F."/>
            <person name="Wakebe H."/>
            <person name="Hishigaki H."/>
            <person name="Watanabe T."/>
            <person name="Sugiyama A."/>
            <person name="Takemoto M."/>
            <person name="Kawakami B."/>
            <person name="Yamazaki M."/>
            <person name="Watanabe K."/>
            <person name="Kumagai A."/>
            <person name="Itakura S."/>
            <person name="Fukuzumi Y."/>
            <person name="Fujimori Y."/>
            <person name="Komiyama M."/>
            <person name="Tashiro H."/>
            <person name="Tanigami A."/>
            <person name="Fujiwara T."/>
            <person name="Ono T."/>
            <person name="Yamada K."/>
            <person name="Fujii Y."/>
            <person name="Ozaki K."/>
            <person name="Hirao M."/>
            <person name="Ohmori Y."/>
            <person name="Kawabata A."/>
            <person name="Hikiji T."/>
            <person name="Kobatake N."/>
            <person name="Inagaki H."/>
            <person name="Ikema Y."/>
            <person name="Okamoto S."/>
            <person name="Okitani R."/>
            <person name="Kawakami T."/>
            <person name="Noguchi S."/>
            <person name="Itoh T."/>
            <person name="Shigeta K."/>
            <person name="Senba T."/>
            <person name="Matsumura K."/>
            <person name="Nakajima Y."/>
            <person name="Mizuno T."/>
            <person name="Morinaga M."/>
            <person name="Sasaki M."/>
            <person name="Togashi T."/>
            <person name="Oyama M."/>
            <person name="Hata H."/>
            <person name="Watanabe M."/>
            <person name="Komatsu T."/>
            <person name="Mizushima-Sugano J."/>
            <person name="Satoh T."/>
            <person name="Shirai Y."/>
            <person name="Takahashi Y."/>
            <person name="Nakagawa K."/>
            <person name="Okumura K."/>
            <person name="Nagase T."/>
            <person name="Nomura N."/>
            <person name="Kikuchi H."/>
            <person name="Masuho Y."/>
            <person name="Yamashita R."/>
            <person name="Nakai K."/>
            <person name="Yada T."/>
            <person name="Nakamura Y."/>
            <person name="Ohara O."/>
            <person name="Isogai T."/>
            <person name="Sugano S."/>
        </authorList>
    </citation>
    <scope>NUCLEOTIDE SEQUENCE [LARGE SCALE MRNA] (ISOFORMS 1 AND 2)</scope>
    <scope>VARIANT SER-391</scope>
    <source>
        <tissue>Testis</tissue>
    </source>
</reference>
<reference key="6">
    <citation type="submission" date="2003-04" db="EMBL/GenBank/DDBJ databases">
        <authorList>
            <consortium name="NIEHS SNPs program"/>
        </authorList>
    </citation>
    <scope>NUCLEOTIDE SEQUENCE [GENOMIC DNA]</scope>
    <scope>VARIANTS LEU-82; CYS-193; SER-350; VAL-356; SER-391; SER-440 AND HIS-496</scope>
</reference>
<reference key="7">
    <citation type="journal article" date="1999" name="Nature">
        <title>The DNA sequence of human chromosome 22.</title>
        <authorList>
            <person name="Dunham I."/>
            <person name="Hunt A.R."/>
            <person name="Collins J.E."/>
            <person name="Bruskiewich R."/>
            <person name="Beare D.M."/>
            <person name="Clamp M."/>
            <person name="Smink L.J."/>
            <person name="Ainscough R."/>
            <person name="Almeida J.P."/>
            <person name="Babbage A.K."/>
            <person name="Bagguley C."/>
            <person name="Bailey J."/>
            <person name="Barlow K.F."/>
            <person name="Bates K.N."/>
            <person name="Beasley O.P."/>
            <person name="Bird C.P."/>
            <person name="Blakey S.E."/>
            <person name="Bridgeman A.M."/>
            <person name="Buck D."/>
            <person name="Burgess J."/>
            <person name="Burrill W.D."/>
            <person name="Burton J."/>
            <person name="Carder C."/>
            <person name="Carter N.P."/>
            <person name="Chen Y."/>
            <person name="Clark G."/>
            <person name="Clegg S.M."/>
            <person name="Cobley V.E."/>
            <person name="Cole C.G."/>
            <person name="Collier R.E."/>
            <person name="Connor R."/>
            <person name="Conroy D."/>
            <person name="Corby N.R."/>
            <person name="Coville G.J."/>
            <person name="Cox A.V."/>
            <person name="Davis J."/>
            <person name="Dawson E."/>
            <person name="Dhami P.D."/>
            <person name="Dockree C."/>
            <person name="Dodsworth S.J."/>
            <person name="Durbin R.M."/>
            <person name="Ellington A.G."/>
            <person name="Evans K.L."/>
            <person name="Fey J.M."/>
            <person name="Fleming K."/>
            <person name="French L."/>
            <person name="Garner A.A."/>
            <person name="Gilbert J.G.R."/>
            <person name="Goward M.E."/>
            <person name="Grafham D.V."/>
            <person name="Griffiths M.N.D."/>
            <person name="Hall C."/>
            <person name="Hall R.E."/>
            <person name="Hall-Tamlyn G."/>
            <person name="Heathcott R.W."/>
            <person name="Ho S."/>
            <person name="Holmes S."/>
            <person name="Hunt S.E."/>
            <person name="Jones M.C."/>
            <person name="Kershaw J."/>
            <person name="Kimberley A.M."/>
            <person name="King A."/>
            <person name="Laird G.K."/>
            <person name="Langford C.F."/>
            <person name="Leversha M.A."/>
            <person name="Lloyd C."/>
            <person name="Lloyd D.M."/>
            <person name="Martyn I.D."/>
            <person name="Mashreghi-Mohammadi M."/>
            <person name="Matthews L.H."/>
            <person name="Mccann O.T."/>
            <person name="Mcclay J."/>
            <person name="Mclaren S."/>
            <person name="McMurray A.A."/>
            <person name="Milne S.A."/>
            <person name="Mortimore B.J."/>
            <person name="Odell C.N."/>
            <person name="Pavitt R."/>
            <person name="Pearce A.V."/>
            <person name="Pearson D."/>
            <person name="Phillimore B.J.C.T."/>
            <person name="Phillips S.H."/>
            <person name="Plumb R.W."/>
            <person name="Ramsay H."/>
            <person name="Ramsey Y."/>
            <person name="Rogers L."/>
            <person name="Ross M.T."/>
            <person name="Scott C.E."/>
            <person name="Sehra H.K."/>
            <person name="Skuce C.D."/>
            <person name="Smalley S."/>
            <person name="Smith M.L."/>
            <person name="Soderlund C."/>
            <person name="Spragon L."/>
            <person name="Steward C.A."/>
            <person name="Sulston J.E."/>
            <person name="Swann R.M."/>
            <person name="Vaudin M."/>
            <person name="Wall M."/>
            <person name="Wallis J.M."/>
            <person name="Whiteley M.N."/>
            <person name="Willey D.L."/>
            <person name="Williams L."/>
            <person name="Williams S.A."/>
            <person name="Williamson H."/>
            <person name="Wilmer T.E."/>
            <person name="Wilming L."/>
            <person name="Wright C.L."/>
            <person name="Hubbard T."/>
            <person name="Bentley D.R."/>
            <person name="Beck S."/>
            <person name="Rogers J."/>
            <person name="Shimizu N."/>
            <person name="Minoshima S."/>
            <person name="Kawasaki K."/>
            <person name="Sasaki T."/>
            <person name="Asakawa S."/>
            <person name="Kudoh J."/>
            <person name="Shintani A."/>
            <person name="Shibuya K."/>
            <person name="Yoshizaki Y."/>
            <person name="Aoki N."/>
            <person name="Mitsuyama S."/>
            <person name="Roe B.A."/>
            <person name="Chen F."/>
            <person name="Chu L."/>
            <person name="Crabtree J."/>
            <person name="Deschamps S."/>
            <person name="Do A."/>
            <person name="Do T."/>
            <person name="Dorman A."/>
            <person name="Fang F."/>
            <person name="Fu Y."/>
            <person name="Hu P."/>
            <person name="Hua A."/>
            <person name="Kenton S."/>
            <person name="Lai H."/>
            <person name="Lao H.I."/>
            <person name="Lewis J."/>
            <person name="Lewis S."/>
            <person name="Lin S.-P."/>
            <person name="Loh P."/>
            <person name="Malaj E."/>
            <person name="Nguyen T."/>
            <person name="Pan H."/>
            <person name="Phan S."/>
            <person name="Qi S."/>
            <person name="Qian Y."/>
            <person name="Ray L."/>
            <person name="Ren Q."/>
            <person name="Shaull S."/>
            <person name="Sloan D."/>
            <person name="Song L."/>
            <person name="Wang Q."/>
            <person name="Wang Y."/>
            <person name="Wang Z."/>
            <person name="White J."/>
            <person name="Willingham D."/>
            <person name="Wu H."/>
            <person name="Yao Z."/>
            <person name="Zhan M."/>
            <person name="Zhang G."/>
            <person name="Chissoe S."/>
            <person name="Murray J."/>
            <person name="Miller N."/>
            <person name="Minx P."/>
            <person name="Fulton R."/>
            <person name="Johnson D."/>
            <person name="Bemis G."/>
            <person name="Bentley D."/>
            <person name="Bradshaw H."/>
            <person name="Bourne S."/>
            <person name="Cordes M."/>
            <person name="Du Z."/>
            <person name="Fulton L."/>
            <person name="Goela D."/>
            <person name="Graves T."/>
            <person name="Hawkins J."/>
            <person name="Hinds K."/>
            <person name="Kemp K."/>
            <person name="Latreille P."/>
            <person name="Layman D."/>
            <person name="Ozersky P."/>
            <person name="Rohlfing T."/>
            <person name="Scheet P."/>
            <person name="Walker C."/>
            <person name="Wamsley A."/>
            <person name="Wohldmann P."/>
            <person name="Pepin K."/>
            <person name="Nelson J."/>
            <person name="Korf I."/>
            <person name="Bedell J.A."/>
            <person name="Hillier L.W."/>
            <person name="Mardis E."/>
            <person name="Waterston R."/>
            <person name="Wilson R."/>
            <person name="Emanuel B.S."/>
            <person name="Shaikh T."/>
            <person name="Kurahashi H."/>
            <person name="Saitta S."/>
            <person name="Budarf M.L."/>
            <person name="McDermid H.E."/>
            <person name="Johnson A."/>
            <person name="Wong A.C.C."/>
            <person name="Morrow B.E."/>
            <person name="Edelmann L."/>
            <person name="Kim U.J."/>
            <person name="Shizuya H."/>
            <person name="Simon M.I."/>
            <person name="Dumanski J.P."/>
            <person name="Peyrard M."/>
            <person name="Kedra D."/>
            <person name="Seroussi E."/>
            <person name="Fransson I."/>
            <person name="Tapia I."/>
            <person name="Bruder C.E."/>
            <person name="O'Brien K.P."/>
            <person name="Wilkinson P."/>
            <person name="Bodenteich A."/>
            <person name="Hartman K."/>
            <person name="Hu X."/>
            <person name="Khan A.S."/>
            <person name="Lane L."/>
            <person name="Tilahun Y."/>
            <person name="Wright H."/>
        </authorList>
    </citation>
    <scope>NUCLEOTIDE SEQUENCE [LARGE SCALE GENOMIC DNA]</scope>
</reference>
<reference key="8">
    <citation type="journal article" date="2004" name="Genome Res.">
        <title>The status, quality, and expansion of the NIH full-length cDNA project: the Mammalian Gene Collection (MGC).</title>
        <authorList>
            <consortium name="The MGC Project Team"/>
        </authorList>
    </citation>
    <scope>NUCLEOTIDE SEQUENCE [LARGE SCALE MRNA] (ISOFORM 1)</scope>
    <scope>VARIANT SER-391</scope>
    <source>
        <tissue>B-cell</tissue>
    </source>
</reference>
<reference key="9">
    <citation type="journal article" date="1992" name="Biochim. Biophys. Acta">
        <title>Proteolytic processing of human lysosomal arylsulfatase A.</title>
        <authorList>
            <person name="Fujii T."/>
            <person name="Kobayashi T."/>
            <person name="Honke K."/>
            <person name="Gasa S."/>
            <person name="Ishikawa M."/>
            <person name="Shimizu T."/>
            <person name="Makita A."/>
        </authorList>
    </citation>
    <scope>PROTEIN SEQUENCE OF 19-33 AND 434-479</scope>
    <scope>SUBUNIT</scope>
</reference>
<reference key="10">
    <citation type="journal article" date="1995" name="Cell">
        <title>A novel amino acid modification in sulfatases that is defective in multiple sulfatase deficiency.</title>
        <authorList>
            <person name="Schmidt B."/>
            <person name="Selmer T."/>
            <person name="Ingendoh A."/>
            <person name="von Figura K."/>
        </authorList>
    </citation>
    <scope>PARTIAL PROTEIN SEQUENCE</scope>
    <scope>IDENTIFICATION BY MASS SPECTROMETRY</scope>
    <scope>OXOALANINE AT CYS-69</scope>
    <scope>LACK OF OXOALANINE IN MSD</scope>
</reference>
<reference key="11">
    <citation type="journal article" date="1997" name="Proc. Natl. Acad. Sci. U.S.A.">
        <title>Conversion of cysteine to formylglycine: a protein modification in the endoplasmic reticulum.</title>
        <authorList>
            <person name="Dierks T."/>
            <person name="Schmidt B."/>
            <person name="von Figura K."/>
        </authorList>
    </citation>
    <scope>OXOALANINE AT CYS-69</scope>
    <scope>MUTAGENESIS OF CYS-69 AND 69-CYS-THR-70</scope>
    <scope>SUBCELLULAR LOCATION</scope>
</reference>
<reference key="12">
    <citation type="journal article" date="2004" name="Hum. Mutat.">
        <title>Molecular and functional analysis of SUMF1 mutations in multiple sulfatase deficiency.</title>
        <authorList>
            <person name="Cosma M.P."/>
            <person name="Pepe S."/>
            <person name="Parenti G."/>
            <person name="Settembre C."/>
            <person name="Annunziata I."/>
            <person name="Wade-Martins R."/>
            <person name="Domenico C.D."/>
            <person name="Natale P.D."/>
            <person name="Mankad A."/>
            <person name="Cox B."/>
            <person name="Uziel G."/>
            <person name="Mancini G.M."/>
            <person name="Zammarchi E."/>
            <person name="Donati M.A."/>
            <person name="Kleijer W.J."/>
            <person name="Filocamo M."/>
            <person name="Carrozzo R."/>
            <person name="Carella M."/>
            <person name="Ballabio A."/>
        </authorList>
    </citation>
    <scope>INVOLVEMENT IN MSD</scope>
</reference>
<reference key="13">
    <citation type="journal article" date="2009" name="J. Proteome Res.">
        <title>Glycoproteomics analysis of human liver tissue by combination of multiple enzyme digestion and hydrazide chemistry.</title>
        <authorList>
            <person name="Chen R."/>
            <person name="Jiang X."/>
            <person name="Sun D."/>
            <person name="Han G."/>
            <person name="Wang F."/>
            <person name="Ye M."/>
            <person name="Wang L."/>
            <person name="Zou H."/>
        </authorList>
    </citation>
    <scope>GLYCOSYLATION [LARGE SCALE ANALYSIS] AT ASN-158 AND ASN-350</scope>
    <source>
        <tissue>Liver</tissue>
    </source>
</reference>
<reference key="14">
    <citation type="journal article" date="2014" name="Anal. Chem.">
        <title>A new analytical bench assay for the determination of arylsulfatase a activity toward galactosyl-3-sulfate ceramide: implication for metachromatic leukodystrophy diagnosis.</title>
        <authorList>
            <person name="Morena F."/>
            <person name="di Girolamo I."/>
            <person name="Emiliani C."/>
            <person name="Gritti A."/>
            <person name="Biffi A."/>
            <person name="Martino S."/>
        </authorList>
    </citation>
    <scope>CATALYTIC ACTIVITY</scope>
    <scope>FUNCTION</scope>
    <scope>BIOPHYSICOCHEMICAL PROPERTIES</scope>
</reference>
<reference key="15">
    <citation type="journal article" date="1998" name="Biochemistry">
        <title>Crystal structure of human arylsulfatase A: the aldehyde function and the metal ion at the active site suggest a novel mechanism for sulfate ester hydrolysis.</title>
        <authorList>
            <person name="Lukatela G."/>
            <person name="Krauss N."/>
            <person name="Theis K."/>
            <person name="Selmer T."/>
            <person name="Gieselmann V."/>
            <person name="von Figura K."/>
            <person name="Saenger W."/>
        </authorList>
    </citation>
    <scope>X-RAY CRYSTALLOGRAPHY (2.1 ANGSTROMS)</scope>
    <scope>OLIGOMERIZATION</scope>
</reference>
<reference key="16">
    <citation type="journal article" date="2001" name="J. Mol. Biol.">
        <title>Crystal structure of an enzyme-substrate complex provides insight into the interaction between human arylsulfatase A and its substrates during catalysis.</title>
        <authorList>
            <person name="von Buelow R."/>
            <person name="Schmidt B."/>
            <person name="Dierks T."/>
            <person name="von Figura K."/>
            <person name="Uson I."/>
        </authorList>
    </citation>
    <scope>X-RAY CRYSTALLOGRAPHY (2.35 ANGSTROMS)</scope>
    <scope>MUTAGENESIS OF CYS-69</scope>
</reference>
<reference key="17">
    <citation type="journal article" date="2003" name="J. Inorg. Biochem.">
        <title>Crystal structure of a covalent intermediate of endogenous human arylsulfatase A.</title>
        <authorList>
            <person name="Chruszcz M."/>
            <person name="Laidler P."/>
            <person name="Monkiewicz M."/>
            <person name="Ortlund E."/>
            <person name="Lebioda L."/>
            <person name="Lewinski K."/>
        </authorList>
    </citation>
    <scope>X-RAY CRYSTALLOGRAPHY (2.75 ANGSTROMS) OF 19-507</scope>
    <scope>SUBUNIT</scope>
    <scope>GLYCOSYLATION AT ASN-158 AND ASN-184</scope>
    <scope>ACTIVE SITE</scope>
    <scope>ACTIVITY REGULATION</scope>
    <scope>CALCIUM-BINDING</scope>
    <scope>COFACTOR</scope>
</reference>
<reference key="18">
    <citation type="journal article" date="2006" name="Proc. Natl. Acad. Sci. U.S.A.">
        <title>A general binding mechanism for all human sulfatases by the formylglycine-generating enzyme.</title>
        <authorList>
            <person name="Roeser D."/>
            <person name="Preusser-Kunze A."/>
            <person name="Schmidt B."/>
            <person name="Gasow K."/>
            <person name="Wittmann J.G."/>
            <person name="Dierks T."/>
            <person name="von Figura K."/>
            <person name="Rudolph M.G."/>
        </authorList>
    </citation>
    <scope>X-RAY CRYSTALLOGRAPHY (1.55 ANGSTROMS) OF 69-73 IN COMPLEX WITH SUMF1</scope>
</reference>
<reference key="19">
    <citation type="journal article" date="1994" name="Hum. Mutat.">
        <title>Molecular genetics of metachromatic leukodystrophy.</title>
        <authorList>
            <person name="Gieselmann V."/>
            <person name="Zlotogora J."/>
            <person name="Harris A."/>
            <person name="Wenger D.A."/>
            <person name="Morris C.P."/>
        </authorList>
    </citation>
    <scope>REVIEW ON MLD VARIANTS</scope>
</reference>
<reference key="20">
    <citation type="journal article" date="1989" name="Proc. Natl. Acad. Sci. U.S.A.">
        <title>Arylsulfatase A pseudodeficiency: loss of a polyadenylylation signal and N-glycosylation site.</title>
        <authorList>
            <person name="Gieselmann V."/>
            <person name="Polten A."/>
            <person name="Kreysing J."/>
            <person name="von Figura K."/>
        </authorList>
    </citation>
    <scope>INVOLVEMENT IN MLD</scope>
    <scope>VARIANT SER-350</scope>
    <scope>CHARACTERIZATION OF VARIANT SER-350</scope>
</reference>
<reference key="21">
    <citation type="journal article" date="1991" name="Am. J. Hum. Genet.">
        <title>Identification of a mutation in the arylsulfatase A gene of a patient with adult-type metachromatic leukodystrophy.</title>
        <authorList>
            <person name="Kondo R."/>
            <person name="Wakamatsu N."/>
            <person name="Yoshino H."/>
            <person name="Fukuhara N."/>
            <person name="Miyatake T."/>
            <person name="Tsuji S."/>
        </authorList>
    </citation>
    <scope>VARIANT MLD ASP-99</scope>
</reference>
<reference key="22">
    <citation type="journal article" date="1991" name="Am. J. Hum. Genet.">
        <title>Mutations in the arylsulfatase A pseudodeficiency allele causing metachromatic leukodystrophy.</title>
        <authorList>
            <person name="Gieselmann V."/>
            <person name="Fluharty A.L."/>
            <person name="Toennesen T."/>
            <person name="von Figura K."/>
        </authorList>
    </citation>
    <scope>VARIANT MLD PHE-96</scope>
</reference>
<reference key="23">
    <citation type="journal article" date="1991" name="N. Engl. J. Med.">
        <title>Molecular basis of different forms of metachromatic leukodystrophy.</title>
        <authorList>
            <person name="Polten A."/>
            <person name="Fluharty A.L."/>
            <person name="Fluharty C.B."/>
            <person name="Kappler J."/>
            <person name="von Figura K."/>
            <person name="Gieselmann V."/>
        </authorList>
    </citation>
    <scope>VARIANT MLD LEU-426</scope>
    <scope>VARIANTS CYS-193 AND SER-391</scope>
</reference>
<reference key="24">
    <citation type="journal article" date="1992" name="Ann. Neurol.">
        <title>Late-onset metachromatic leukodystrophy: molecular pathology in two siblings.</title>
        <authorList>
            <person name="Kappler J."/>
            <person name="von Figura K."/>
            <person name="Gieselmann V."/>
        </authorList>
    </citation>
    <scope>VARIANT MLD GLN-84</scope>
</reference>
<reference key="25">
    <citation type="journal article" date="1993" name="Am. J. Hum. Genet.">
        <title>High residual arylsulfatase A (ARSA) activity in a patient with late-infantile metachromatic leukodystrophy.</title>
        <authorList>
            <person name="Kreysing J."/>
            <person name="Bohne W."/>
            <person name="Bosenberg C."/>
            <person name="Marchesini S."/>
            <person name="Turpin J.C."/>
            <person name="Baumann N."/>
            <person name="von Figura K."/>
            <person name="Gieselmann V."/>
        </authorList>
    </citation>
    <scope>VARIANT MLD SER-309</scope>
</reference>
<reference key="26">
    <citation type="journal article" date="1993" name="DNA Cell Biol.">
        <title>Mutations in the arylsulfatase A gene of Japanese patients with metachromatic leukodystrophy.</title>
        <authorList>
            <person name="Hasegawa Y."/>
            <person name="Kawame H."/>
            <person name="Eto Y."/>
        </authorList>
    </citation>
    <scope>VARIANT MLD ARG-245</scope>
</reference>
<reference key="27">
    <citation type="journal article" date="1993" name="Hum. Genet.">
        <title>Prevalence of common mutations in the arylsulphatase A gene in metachromatic leukodystrophy patients diagnosed in Britain.</title>
        <authorList>
            <person name="Barth M.L."/>
            <person name="Fensom A."/>
            <person name="Harris A."/>
        </authorList>
    </citation>
    <scope>VARIANT MLD LEU-426</scope>
</reference>
<reference key="28">
    <citation type="journal article" date="1993" name="Hum. Genet.">
        <title>An adult-type metachromatic leukodystrophy caused by substitution of serine for glycine-122 in arylsulfatase A.</title>
        <authorList>
            <person name="Honke K."/>
            <person name="Kobayashi T."/>
            <person name="Fujii T."/>
            <person name="Gasa S."/>
            <person name="Xu M."/>
            <person name="Takamaru Y."/>
            <person name="Kondo R."/>
            <person name="Tsuji S."/>
            <person name="Makita A."/>
        </authorList>
    </citation>
    <scope>VARIANT MLD SER-122</scope>
</reference>
<reference key="29">
    <citation type="journal article" date="1993" name="Hum. Mol. Genet.">
        <title>Missense mutations in the arylsulphatase A genes of metachromatic leukodystrophy patients.</title>
        <authorList>
            <person name="Barth M.L."/>
            <person name="Fensom A."/>
            <person name="Harris A."/>
        </authorList>
    </citation>
    <scope>VARIANTS MLD VAL-212; VAL-224 AND TYR-295</scope>
</reference>
<reference key="30">
    <citation type="journal article" date="1993" name="Hum. Mutat.">
        <title>An arylsulfatase A (ARSA) missense mutation (T274M) causing late-infantile metachromatic leukodystrophy.</title>
        <authorList>
            <person name="Harvey J.S."/>
            <person name="Nelson P.V."/>
            <person name="Carey W.F."/>
            <person name="Robertson E.F."/>
            <person name="Morris C.P."/>
        </authorList>
    </citation>
    <scope>VARIANT MLD MET-274</scope>
</reference>
<reference key="31">
    <citation type="journal article" date="1994" name="Hum. Genet.">
        <title>Single exon mutation in arylsulfatase A gene has two effects: loss of enzyme activity and aberrant splicing.</title>
        <authorList>
            <person name="Hasegawa Y."/>
            <person name="Kawame H."/>
            <person name="Ida H."/>
            <person name="Ohashi T."/>
            <person name="Eto Y."/>
        </authorList>
    </citation>
    <scope>VARIANT MLD ILE-409</scope>
</reference>
<reference key="32">
    <citation type="journal article" date="1995" name="Am. J. Hum. Genet.">
        <title>Multiple mutations are responsible for the high frequency of metachromatic leukodystrophy in a small geographic area.</title>
        <authorList>
            <person name="Heinisch U."/>
            <person name="Zlotogora J."/>
            <person name="Kafert S."/>
            <person name="Gieselmann V."/>
        </authorList>
    </citation>
    <scope>VARIANTS MLD ASP-86; LEU-96; HIS-190; MET-274 AND TRP-370</scope>
    <scope>CHARACTERIZATION OF VARIANTS MLD ASP-86; LEU-96; HIS-190; MET-274 AND TRP-370</scope>
</reference>
<reference key="33">
    <citation type="journal article" date="1995" name="Hum. Genet.">
        <title>A missense mutation P136L in the arylsulfatase A gene causes instability and loss of activity of the mutant enzyme.</title>
        <authorList>
            <person name="Kafert S."/>
            <person name="Heinisch U."/>
            <person name="Zlotogora J."/>
            <person name="Gieselmann V."/>
        </authorList>
    </citation>
    <scope>VARIANT MLD LEU-136</scope>
</reference>
<reference key="34">
    <citation type="journal article" date="1995" name="Hum. Mutat.">
        <title>Identification of seven novel mutations associated with metachromatic leukodystrophy.</title>
        <authorList>
            <person name="Barth M.L."/>
            <person name="Fensom A."/>
            <person name="Harris A."/>
        </authorList>
    </citation>
    <scope>VARIANTS MLD LEU-82; TYR-172; CYS-201; GLN-311; VAL-335 AND TRP-390</scope>
</reference>
<reference key="35">
    <citation type="journal article" date="1996" name="Brain Dev.">
        <title>Two novel mutations in a Japanese patient with the late-infantile form of metachromatic leukodystrophy.</title>
        <authorList>
            <person name="Tsuda T."/>
            <person name="Hasegawa Y."/>
            <person name="Eto Y."/>
        </authorList>
    </citation>
    <scope>VARIANTS MLD HIS-153 AND VAL-308</scope>
    <scope>CHARACTERIZATION OF VARIANTS MLD HIS-153 AND VAL-308</scope>
</reference>
<reference key="36">
    <citation type="journal article" date="1996" name="Hum. Mutat.">
        <title>Characterization of two arylsulfatase A missense mutations D335V and T274M causing late infantile metachromatic leukodystrophy.</title>
        <authorList>
            <person name="Hess B."/>
            <person name="Kafert S."/>
            <person name="Heinisch U."/>
            <person name="Wenger D.A."/>
            <person name="Zlotogora J."/>
            <person name="Gieselmann V."/>
        </authorList>
    </citation>
    <scope>CHARACTERIZATION OF VARIANTS MET-274 AND VAL-335</scope>
</reference>
<reference key="37">
    <citation type="journal article" date="1997" name="Clin. Genet.">
        <title>A T &gt; C transition causing a Leu &gt; Pro substitution in a conserved region of the arylsulfatase A gene in a late infantile metachromatic leukodystrophy patient.</title>
        <authorList>
            <person name="Regis S."/>
            <person name="Filocamo M."/>
            <person name="Stroppiano M."/>
            <person name="Corsolini F."/>
            <person name="Gatti R."/>
        </authorList>
    </citation>
    <scope>VARIANT MLD PRO-428</scope>
</reference>
<reference key="38">
    <citation type="journal article" date="1997" name="Hum. Mutat.">
        <title>Metachromatic leukodystrophy: identification of the first deletion in exon 1 and of nine novel point mutations in the arylsulfatase A gene.</title>
        <authorList>
            <person name="Draghia R."/>
            <person name="Letourneur F."/>
            <person name="Drugan C."/>
            <person name="Manicom J."/>
            <person name="Blanchot C."/>
            <person name="Kahn A."/>
            <person name="Poenaru L."/>
            <person name="Caillaud C."/>
        </authorList>
    </citation>
    <scope>VARIANTS MLD ASN-95; ARG-119; TYR-152; HIS-244; TYR-250; THR-314; ASN-367 AND CYS-384</scope>
    <scope>VARIANT HIS-496</scope>
</reference>
<reference key="39">
    <citation type="journal article" date="1998" name="Hum. Genet.">
        <title>A 9-bp deletion (2320del9) on the background of the arylsulfatase A pseudodeficiency allele in a metachromatic leukodystrophy patient and in a patient with nonprogressive neurological symptoms.</title>
        <authorList>
            <person name="Regis S."/>
            <person name="Filocamo M."/>
            <person name="Stroppiano M."/>
            <person name="Corsolini F."/>
            <person name="Caroli F."/>
            <person name="Gatti R."/>
        </authorList>
    </citation>
    <scope>VARIANT MLD 406-SER--THR-408 DEL</scope>
</reference>
<reference key="40">
    <citation type="journal article" date="1998" name="Hum. Genet.">
        <title>Molecular genetic characterization of two metachromatic leukodystrophy patients who carry the T799G mutation and show different phenotypes; description of a novel null-type mutation.</title>
        <authorList>
            <person name="Gomez-Lira M."/>
            <person name="Perusi C."/>
            <person name="Mottes M."/>
            <person name="Pignatti P.F."/>
            <person name="Manfredi M."/>
            <person name="Rizzuto N."/>
            <person name="Salviati A."/>
        </authorList>
    </citation>
    <scope>VARIANTS MLD PRO-135 AND SER-179</scope>
</reference>
<reference key="41">
    <citation type="journal article" date="1998" name="Hum. Genet.">
        <authorList>
            <person name="Gomez-Lira M."/>
            <person name="Perusi C."/>
            <person name="Mottes M."/>
            <person name="Pignatti P.F."/>
            <person name="Manfredi M."/>
            <person name="Rizzuto N."/>
            <person name="Salviati A."/>
        </authorList>
    </citation>
    <scope>ERRATUM OF PUBMED:9600244</scope>
</reference>
<reference key="42">
    <citation type="journal article" date="1998" name="Hum. Mutat.">
        <title>The R496H mutation of arylsulfatase A does not cause metachromatic leukodystrophy.</title>
        <authorList>
            <person name="Ricketts M.H."/>
            <person name="Poretz R.D."/>
            <person name="Manowitz P."/>
        </authorList>
    </citation>
    <scope>VARIANT HIS-496</scope>
</reference>
<reference key="43">
    <citation type="journal article" date="1998" name="Hum. Mutat. Suppl.">
        <title>Two novel mutations in the arylsulfatase A gene associated with juvenile (R390Q) and adult onset (H397Y) metachromatic leukodystrophy.</title>
        <authorList>
            <person name="Coulter-Mackie M.B."/>
            <person name="Gagnier L."/>
        </authorList>
    </citation>
    <scope>VARIANTS MLD GLN-390 AND TYR-397</scope>
</reference>
<reference key="44">
    <citation type="journal article" date="1998" name="J. Inherit. Metab. Dis.">
        <title>Prevalence of arylsulphatase A mutations in 11 Japanese patients with metachromatic leukodystrophy: identification of two novel mutations.</title>
        <authorList>
            <person name="Kurosawa K."/>
            <person name="Ida H."/>
            <person name="Eto Y."/>
        </authorList>
    </citation>
    <scope>VARIANT MLD SER-298</scope>
    <scope>CHARACTERIZATION OF VARIANT MLD SER-298</scope>
</reference>
<reference key="45">
    <citation type="journal article" date="1999" name="Hum. Mutat.">
        <title>Coincidence of two novel arylsulfatase A alleles and mutation 459+1G&gt;A within a family with metachromatic leukodystrophy: molecular basis of phenotypic heterogeneity.</title>
        <authorList>
            <person name="Berger J."/>
            <person name="Gmach M."/>
            <person name="Mayr U."/>
            <person name="Molzer B."/>
            <person name="Bernheimer H."/>
        </authorList>
    </citation>
    <scope>VARIANTS PRO-76; CYS-193; SER-391 AND VAL-464</scope>
</reference>
<reference key="46">
    <citation type="journal article" date="1999" name="Hum. Mutat.">
        <title>Metachromatic leucodystrophy in Portugal-finding of four new molecular lesions: C300F, P425T, g.1190-1191insC, and g.2408delC.</title>
        <authorList>
            <person name="Marcao A."/>
            <person name="Amaral O."/>
            <person name="Pinto E."/>
            <person name="Pinto R."/>
            <person name="Sa Miranda M.C."/>
        </authorList>
    </citation>
    <scope>VARIANTS MLD PHE-300 AND THR-425</scope>
</reference>
<reference key="47">
    <citation type="journal article" date="1999" name="Hum. Mutat.">
        <title>Identification of 12 novel mutations and two new polymorphisms in the arylsulfatase A gene: haplotype and genotype-phenotype correlation studies in Spanish metachromatic leukodystrophy patients.</title>
        <authorList>
            <person name="Gort L."/>
            <person name="Coll M.J."/>
            <person name="Chabas A."/>
        </authorList>
    </citation>
    <scope>VARIANTS MLD SER-32; PRO-68; TRP-84; ALA-94; VAL-99; SER-136; VAL-212; TYR-227; HIS-255; HIS-288; ASP-308; ILE-327 AND LEU-377</scope>
    <scope>VARIANTS CYS-193; SER-350 AND SER-391</scope>
</reference>
<reference key="48">
    <citation type="journal article" date="1999" name="Hum. Mutat.">
        <title>Metachromatic leucodystrophy: a newly identified mutation in arylsulphatase A, D281Y, found as a compound heterozygote with I179L in an adult onset case.</title>
        <authorList>
            <person name="Halsall D.J."/>
            <person name="Halligan E.P."/>
            <person name="Elsey T.S."/>
            <person name="Cox T.M."/>
        </authorList>
    </citation>
    <scope>VARIANTS MLD SER-179 AND TYR-281</scope>
</reference>
<reference key="49">
    <citation type="journal article" date="1999" name="Mol. Genet. Metab.">
        <title>Metachromatic leukodystrophy: subtype genotype/phenotype correlations and identification of novel missense mutations (P148L and P191T) causing the juvenile-onset disease.</title>
        <authorList>
            <person name="Qu Y."/>
            <person name="Shapira E."/>
            <person name="Desnick R.J."/>
        </authorList>
    </citation>
    <scope>VARIANTS MLD LEU-148; THR-191; VAL-335; TYR-397 AND LEU-426</scope>
</reference>
<reference key="50">
    <citation type="journal article" date="2000" name="Am. J. Med. Genet.">
        <title>Characterization of four arylsulfatase A missense mutations G86D, Y201C, D255H, and E312D causing metachromatic leukodystrophy.</title>
        <authorList>
            <person name="Hermann S."/>
            <person name="Schestag F."/>
            <person name="Polten A."/>
            <person name="Kafert S."/>
            <person name="Penzien J."/>
            <person name="Zlotogora J."/>
            <person name="Baumann N."/>
            <person name="Gieselmann V."/>
        </authorList>
    </citation>
    <scope>VARIANTS MLD ASP-86; CYS-201; HIS-255 AND ASP-312</scope>
    <scope>CHARACTERIZATION OF VARIANTS MLD ASP-86; CYS-201; HIS-255 AND ASP-312</scope>
    <scope>FUNCTION</scope>
    <scope>CATALYTIC ACTIVITY</scope>
</reference>
<reference key="51">
    <citation type="journal article" date="2000" name="Neurology">
        <title>Adult-onset MLD: a gene mutation with isolated polyneuropathy.</title>
        <authorList>
            <person name="Felice K.J."/>
            <person name="Gomez Lira M."/>
            <person name="Natowicz M."/>
            <person name="Grunnet M.L."/>
            <person name="Tsongalis G.J."/>
            <person name="Sima A.A.F."/>
            <person name="Kaplan R.F."/>
        </authorList>
    </citation>
    <scope>VARIANT MLD PRO-286</scope>
    <scope>VARIANT SER-391</scope>
</reference>
<reference key="52">
    <citation type="journal article" date="2000" name="Pediatr. Neurol.">
        <title>Variable onset of metachromatic leukodystrophy in a Vietnamese family.</title>
        <authorList>
            <person name="Arbour L.T."/>
            <person name="Silver K."/>
            <person name="Hechtman P."/>
            <person name="Treacy E.P."/>
            <person name="Coulter-Mackie M.B."/>
        </authorList>
    </citation>
    <scope>VARIANT MLD GLY-143</scope>
    <scope>CHARACTERIZATION OF VARIANT MLD GLY-143</scope>
</reference>
<reference key="53">
    <citation type="journal article" date="2001" name="Ann. Neurol.">
        <title>Late-onset metachromatic leukodystrophy clinically presenting as isolated peripheral neuropathy: compound heterozygosity for the IVS2+1G--&gt;A mutation and a newly identified missense mutation (Thr408Ile) in a Spanish family.</title>
        <authorList>
            <person name="Comabella M."/>
            <person name="Waye J.S."/>
            <person name="Raguer N."/>
            <person name="Eng B."/>
            <person name="Dominguez C."/>
            <person name="Navarro C."/>
            <person name="Borras C."/>
            <person name="Krivit W."/>
            <person name="Montalban X."/>
        </authorList>
    </citation>
    <scope>VARIANT MLD ILE-408</scope>
    <scope>VARIANTS CYS-193 AND SER-391</scope>
</reference>
<reference key="54">
    <citation type="journal article" date="2002" name="Hum. Genet.">
        <title>Contribution of arylsulfatase A mutations located on the same allele to enzyme activity reduction and metachromatic leukodystrophy severity.</title>
        <authorList>
            <person name="Regis S."/>
            <person name="Corsolini F."/>
            <person name="Stroppiano M."/>
            <person name="Cusano R."/>
            <person name="Filocamo M."/>
        </authorList>
    </citation>
    <scope>VARIANT MLD LYS-253</scope>
    <scope>CHARACTERIZATION OF VARIANT MLD LYS-253</scope>
    <scope>CHARACTERIZATION OF VARIANTS SER-350; SER-391 AND LEU-426</scope>
</reference>
<reference key="55">
    <citation type="journal article" date="2003" name="Am. J. Med. Genet. A">
        <title>Biochemical characterization of two (C300F, P425T) arylsulfatase A missense mutations.</title>
        <authorList>
            <person name="Marcao A."/>
            <person name="Simonis H."/>
            <person name="Schestag F."/>
            <person name="Sa Miranda M.C."/>
            <person name="Gieselmann V."/>
        </authorList>
    </citation>
    <scope>CHARACTERIZATION OF VARIANTS MLD PHE-300 AND THR-425</scope>
</reference>
<reference key="56">
    <citation type="journal article" date="2003" name="Biochem. Biophys. Res. Commun.">
        <title>Oligomerization capacity of two arylsulfatase A mutants: C300F and P425T.</title>
        <authorList>
            <person name="Marcao A."/>
            <person name="Azevedo J.E."/>
            <person name="Gieselmann V."/>
            <person name="Sa Miranda M.C."/>
        </authorList>
    </citation>
    <scope>CHARACTERIZATION OF VARIANTS MLD PHE-300 AND THR-425</scope>
</reference>
<reference key="57">
    <citation type="journal article" date="2003" name="Hum. Mutat.">
        <title>Identification of nine novel arylsulfatase A (ARSA) gene mutations in patients with metachromatic leukodystrophy (MLD).</title>
        <authorList>
            <person name="Eng B."/>
            <person name="Nakamura L.N."/>
            <person name="O'Reilly N."/>
            <person name="Schokman N."/>
            <person name="Nowaczyk M.M.J."/>
            <person name="Krivit W."/>
            <person name="Waye J.S."/>
        </authorList>
    </citation>
    <scope>VARIANTS MLD LEU-155; GLN-181; VAL-212; HIS-306; SER-325; VAL-335; LEU-426 AND SER-429</scope>
</reference>
<reference key="58">
    <citation type="journal article" date="2003" name="Mol. Genet. Metab.">
        <title>Novel mutations in arylsulfatase A gene in three Ukrainian families with metachromatic leukodystrophy.</title>
        <authorList>
            <person name="Olkhovich N.V."/>
            <person name="Takamura N."/>
            <person name="Pichkur N.A."/>
            <person name="Gorovenko N.G."/>
            <person name="Aoyagi K."/>
            <person name="Yamashita S."/>
        </authorList>
    </citation>
    <scope>VARIANTS MLD SER-136; SER-247; GLU-381; LEU-426 AND GLY-469</scope>
</reference>
<reference key="59">
    <citation type="journal article" date="2004" name="Am. J. Med. Genet. A">
        <title>Novel mutations associated with metachromatic leukodystrophy: phenotype and expression studies in nine Czech and Slovak patients.</title>
        <authorList>
            <person name="Berna L."/>
            <person name="Gieselmann V."/>
            <person name="Poupetova H."/>
            <person name="Hrebicek M."/>
            <person name="Elleder M."/>
            <person name="Ledvinova J."/>
        </authorList>
    </citation>
    <scope>VARIANTS MLD ASN-29; ARG-156; SER-179; SER-293; TYR-294; SER-309 AND LEU-426</scope>
    <scope>VARIANTS CYS-193 AND SER-391</scope>
    <scope>CHARACTERIZATION OF VARIANTS MLD ASN-29; ARG-156; SER-293 AND TYR-294</scope>
</reference>
<reference key="60">
    <citation type="journal article" date="2004" name="J. Neurol. Neurosurg. Psych.">
        <title>Late onset MLD with normal nerve conduction associated with two novel missense mutations in the ASA gene.</title>
        <authorList>
            <person name="Gallo S."/>
            <person name="Randi D."/>
            <person name="Bertelli M."/>
            <person name="Salviati A."/>
            <person name="Pandolfo M."/>
        </authorList>
    </citation>
    <scope>VARIANTS MLD ASP-293 AND GLY-489</scope>
    <scope>VARIANT SER-350</scope>
</reference>
<reference key="61">
    <citation type="journal article" date="2005" name="Arch. Neurol.">
        <title>Adult onset metachromatic leukodystrophy without electroclinical peripheral nervous system involvement: a new mutation in the ARSA gene.</title>
        <authorList>
            <person name="Marcao A.M."/>
            <person name="Wiest R."/>
            <person name="Schindler K."/>
            <person name="Wiesmann U."/>
            <person name="Weis J."/>
            <person name="Schroth G."/>
            <person name="Miranda M.C.S."/>
            <person name="Sturzenegger M."/>
            <person name="Gieselmann V."/>
        </authorList>
    </citation>
    <scope>VARIANT MLD VAL-219</scope>
    <scope>CHARACTERIZATION OF VARIANT MLD VAL-219</scope>
</reference>
<reference key="62">
    <citation type="journal article" date="2008" name="Hum. Mutat.">
        <title>Molecular analysis of ARSA and PSAP genes in twenty-one Italian patients with metachromatic leukodystrophy: identification and functional characterization of 11 novel ARSA alleles.</title>
        <authorList>
            <person name="Grossi S."/>
            <person name="Regis S."/>
            <person name="Rosano C."/>
            <person name="Corsolini F."/>
            <person name="Uziel G."/>
            <person name="Sessa M."/>
            <person name="Di Rocco M."/>
            <person name="Parenti G."/>
            <person name="Deodato F."/>
            <person name="Leuzzi V."/>
            <person name="Biancheri R."/>
            <person name="Filocamo M."/>
        </authorList>
    </citation>
    <scope>VARIANTS MLD ASP-18; HIS-30; GLN-84; PRO-137 DEL; ASP-154; SER-179; CYS-201; PRO-212; HIS-217; LYS-253; SER-282; ASN-302; TRP-370; ASN-376; TRP-390 AND PRO-428</scope>
    <scope>CHARACTERIZATION OF VARIANTS MLD ASP-18; HIS-30; PRO-212; HIS-217; SER-282; ASN-302; TRP-370 AND ASN-376</scope>
</reference>
<reference key="63">
    <citation type="journal article" date="2009" name="Hum. Mutat.">
        <title>Characterization of new arylsulfatase A gene mutations reinforces genotype-phenotype correlation in metachromatic leukodystrophy.</title>
        <authorList>
            <person name="Cesani M."/>
            <person name="Capotondo A."/>
            <person name="Plati T."/>
            <person name="Sergi L.S."/>
            <person name="Fumagalli F."/>
            <person name="Roncarolo M.G."/>
            <person name="Naldini L."/>
            <person name="Comi G."/>
            <person name="Sessa M."/>
            <person name="Biffi A."/>
        </authorList>
    </citation>
    <scope>VARIANTS MLD PRO-52; ASP-138; PRO-212; MET-304; LYS-307 AND GLY-406</scope>
    <scope>CHARACTERIZATION OF VARIANTS MLD PRO-52; ASP-138; PRO-212; MET-304; LYS-307 AND GLY-406</scope>
</reference>
<reference key="64">
    <citation type="journal article" date="2010" name="J. Hum. Genet.">
        <title>Molecular bases of metachromatic leukodystrophy in Polish patients.</title>
        <authorList>
            <person name="Lugowska A."/>
            <person name="Ploski R."/>
            <person name="Wlodarski P."/>
            <person name="Tylki-Szymanska A."/>
        </authorList>
    </citation>
    <scope>VARIANTS MLD SER-179; SER-247; CYS-288; VAL-335; LYS-382; GLN-390; TRP-390; TYR-397 AND LEU-426</scope>
</reference>
<reference key="65">
    <citation type="journal article" date="2011" name="Psychiatry Clin. Neurosci.">
        <title>Adult-type metachromatic leukodystrophy with compound heterozygous ARSA mutations: a case report and phenotypic comparison with a previously reported case.</title>
        <authorList>
            <person name="Hayashi T."/>
            <person name="Nakamura M."/>
            <person name="Ichiba M."/>
            <person name="Matsuda M."/>
            <person name="Kato M."/>
            <person name="Shiokawa N."/>
            <person name="Shimo H."/>
            <person name="Tomiyasu A."/>
            <person name="Mori S."/>
            <person name="Tomiyasu Y."/>
            <person name="Ishizuka T."/>
            <person name="Inamori Y."/>
            <person name="Okamoto Y."/>
            <person name="Umehara F."/>
            <person name="Arimura K."/>
            <person name="Nakabeppu Y."/>
            <person name="Sano A."/>
        </authorList>
    </citation>
    <scope>VARIANTS MLD ASP-99 AND ILE-409</scope>
</reference>
<comment type="function">
    <text evidence="5 33">Hydrolyzes cerebroside sulfate.</text>
</comment>
<comment type="catalytic activity">
    <reaction evidence="5 33">
        <text>an N-acyl-1-beta-D-(3-O-sulfo)-galactosyl-sphing-4-enine + H2O = a beta-D-galactosyl-(1&lt;-&gt;1')-N-acylsphing-4-enine + sulfate + H(+)</text>
        <dbReference type="Rhea" id="RHEA:21300"/>
        <dbReference type="ChEBI" id="CHEBI:15377"/>
        <dbReference type="ChEBI" id="CHEBI:15378"/>
        <dbReference type="ChEBI" id="CHEBI:16189"/>
        <dbReference type="ChEBI" id="CHEBI:18390"/>
        <dbReference type="ChEBI" id="CHEBI:75956"/>
        <dbReference type="EC" id="3.1.6.8"/>
    </reaction>
    <physiologicalReaction direction="left-to-right" evidence="33">
        <dbReference type="Rhea" id="RHEA:21301"/>
    </physiologicalReaction>
</comment>
<comment type="cofactor">
    <cofactor evidence="13">
        <name>Ca(2+)</name>
        <dbReference type="ChEBI" id="CHEBI:29108"/>
    </cofactor>
    <text evidence="13">Binds 1 Ca(2+) ion per subunit.</text>
</comment>
<comment type="activity regulation">
    <text evidence="13">Inhibited by phosphate. The phosphate forms a covalent bond with the active site 3-oxoalanine.</text>
</comment>
<comment type="biophysicochemical properties">
    <kinetics>
        <KM evidence="33">0.099 mM for galactosyl-3-sulfate ceramide</KM>
        <text evidence="33">kcat is 0.087 sec(-1) with galactosyl-3-sulfate ceramide as substrate.</text>
    </kinetics>
    <phDependence>
        <text evidence="33">Optimum pH is 4.5.</text>
    </phDependence>
</comment>
<comment type="subunit">
    <text evidence="13 14 24">Homodimer at neutral pH and homooctamer at acidic pH. Exists both as a single chain of 58 kDa (component A) or as a chain of 50 kDa (component B) linked by disulfide bond(s) to a 7 kDa chain (component C). Interacts with SUMF1.</text>
</comment>
<comment type="interaction">
    <interactant intactId="EBI-2117357">
        <id>P15289</id>
    </interactant>
    <interactant intactId="EBI-715243">
        <id>P50995</id>
        <label>ANXA11</label>
    </interactant>
    <organismsDiffer>false</organismsDiffer>
    <experiments>3</experiments>
</comment>
<comment type="interaction">
    <interactant intactId="EBI-2117357">
        <id>P15289</id>
    </interactant>
    <interactant intactId="EBI-7317823">
        <id>Q6P5X5</id>
        <label>C22orf39</label>
    </interactant>
    <organismsDiffer>false</organismsDiffer>
    <experiments>3</experiments>
</comment>
<comment type="interaction">
    <interactant intactId="EBI-2117357">
        <id>P15289</id>
    </interactant>
    <interactant intactId="EBI-11523526">
        <id>Q13554-3</id>
        <label>CAMK2B</label>
    </interactant>
    <organismsDiffer>false</organismsDiffer>
    <experiments>3</experiments>
</comment>
<comment type="interaction">
    <interactant intactId="EBI-2117357">
        <id>P15289</id>
    </interactant>
    <interactant intactId="EBI-3943153">
        <id>O60826</id>
        <label>CCDC22</label>
    </interactant>
    <organismsDiffer>false</organismsDiffer>
    <experiments>3</experiments>
</comment>
<comment type="interaction">
    <interactant intactId="EBI-2117357">
        <id>P15289</id>
    </interactant>
    <interactant intactId="EBI-724968">
        <id>Q96D98</id>
        <label>EID2B</label>
    </interactant>
    <organismsDiffer>false</organismsDiffer>
    <experiments>3</experiments>
</comment>
<comment type="interaction">
    <interactant intactId="EBI-2117357">
        <id>P15289</id>
    </interactant>
    <interactant intactId="EBI-744099">
        <id>Q9H0I2</id>
        <label>ENKD1</label>
    </interactant>
    <organismsDiffer>false</organismsDiffer>
    <experiments>3</experiments>
</comment>
<comment type="interaction">
    <interactant intactId="EBI-2117357">
        <id>P15289</id>
    </interactant>
    <interactant intactId="EBI-12018822">
        <id>Q12951-2</id>
        <label>FOXI1</label>
    </interactant>
    <organismsDiffer>false</organismsDiffer>
    <experiments>3</experiments>
</comment>
<comment type="interaction">
    <interactant intactId="EBI-2117357">
        <id>P15289</id>
    </interactant>
    <interactant intactId="EBI-602382">
        <id>Q16512</id>
        <label>PKN1</label>
    </interactant>
    <organismsDiffer>false</organismsDiffer>
    <experiments>3</experiments>
</comment>
<comment type="interaction">
    <interactant intactId="EBI-2117357">
        <id>P15289</id>
    </interactant>
    <interactant intactId="EBI-8673859">
        <id>P28069</id>
        <label>POU1F1</label>
    </interactant>
    <organismsDiffer>false</organismsDiffer>
    <experiments>3</experiments>
</comment>
<comment type="interaction">
    <interactant intactId="EBI-2117357">
        <id>P15289</id>
    </interactant>
    <interactant intactId="EBI-9027467">
        <id>O75360</id>
        <label>PROP1</label>
    </interactant>
    <organismsDiffer>false</organismsDiffer>
    <experiments>3</experiments>
</comment>
<comment type="interaction">
    <interactant intactId="EBI-2117357">
        <id>P15289</id>
    </interactant>
    <interactant intactId="EBI-372094">
        <id>Q9BQY4</id>
        <label>RHOXF2</label>
    </interactant>
    <organismsDiffer>false</organismsDiffer>
    <experiments>3</experiments>
</comment>
<comment type="interaction">
    <interactant intactId="EBI-2117357">
        <id>P15289</id>
    </interactant>
    <interactant intactId="EBI-358993">
        <id>Q15645</id>
        <label>TRIP13</label>
    </interactant>
    <organismsDiffer>false</organismsDiffer>
    <experiments>13</experiments>
</comment>
<comment type="interaction">
    <interactant intactId="EBI-2117357">
        <id>P15289</id>
    </interactant>
    <interactant intactId="EBI-10191303">
        <id>O95231</id>
        <label>VENTX</label>
    </interactant>
    <organismsDiffer>false</organismsDiffer>
    <experiments>3</experiments>
</comment>
<comment type="subcellular location">
    <subcellularLocation>
        <location evidence="50">Endoplasmic reticulum</location>
    </subcellularLocation>
    <subcellularLocation>
        <location evidence="60">Lysosome</location>
    </subcellularLocation>
</comment>
<comment type="alternative products">
    <event type="alternative splicing"/>
    <isoform>
        <id>P15289-1</id>
        <name>1</name>
        <sequence type="displayed"/>
    </isoform>
    <isoform>
        <id>P15289-2</id>
        <name>2</name>
        <sequence type="described" ref="VSP_046190"/>
    </isoform>
</comment>
<comment type="PTM">
    <text evidence="36 50">The conversion to 3-oxoalanine (also known as C-formylglycine, FGly), of a serine or cysteine residue in prokaryotes and of a cysteine residue in eukaryotes, is critical for catalytic activity. This post-translational modification is severely defective in multiple sulfatase deficiency (MSD).</text>
</comment>
<comment type="disease" evidence="1 2 3 4 5 6 7 9 10 11 12 15 16 17 19 21 23 25 26 27 28 30 31 32 34 35 37 38 39 40 41 42 43 44 45 47 48 49 51 52 53 55">
    <disease id="DI-00652">
        <name>Metachromatic leukodystrophy</name>
        <acronym>MLD</acronym>
        <description>An autosomal recessive disease caused by abnormal intralysosomal accumulation of cerebroside-3-sulfate in central and peripheral nervous systems, as well as other organs. MLD is clinically characterized by leukodystrophy, progressive demyelination and a variety of neurological symptoms, including gait disturbances, ataxias, optical atrophy, dementia, seizures, and spastic tetraparesis. Decreased arylsulfatase A activity is detected in urine, leukocytes, and fibroblasts of affected individuals. Several forms of the disease can be distinguished according to the age at onset and disease severity: late infantile, juvenile and adult forms, partial cerebroside sulfate deficiency, and pseudoarylsulfatase A deficiency. Individuals with pseudoarylsulfatase A deficiency have low arylsulfatase A activity but lack neurological manifestations and are apparently healthy.</description>
        <dbReference type="MIM" id="250100"/>
    </disease>
    <text>The disease is caused by variants affecting the gene represented in this entry.</text>
</comment>
<comment type="disease" evidence="20">
    <disease id="DI-00791">
        <name>Multiple sulfatase deficiency</name>
        <acronym>MSD</acronym>
        <description>A clinically and biochemically heterogeneous disorder caused by the simultaneous impairment of all sulfatases, due to defective post-translational modification and activation. It combines features of individual sulfatase deficiencies such as metachromatic leukodystrophy, mucopolysaccharidosis, chondrodysplasia punctata, hydrocephalus, ichthyosis, neurologic deterioration and developmental delay.</description>
        <dbReference type="MIM" id="272200"/>
    </disease>
    <text evidence="20 36">The protein represented in this entry is involved in disease pathogenesis. Arylsulfatase A activity is impaired in multiple sulfatase deficiency due to mutations in SUMF1 (PubMed:15146462). SUMF1 mutations result in defective post-translational modification of ARSA at residue Cys-69 that is not converted to 3-oxoalanine (PubMed:7628016).</text>
</comment>
<comment type="miscellaneous">
    <text>The metal cofactor was first identified as magnesium ion, based on the structure of the recombinant protein, but when purified from human placenta, the protein contains 1 calcium ion per subunit.</text>
</comment>
<comment type="similarity">
    <text evidence="59">Belongs to the sulfatase family.</text>
</comment>
<comment type="sequence caution" evidence="59">
    <conflict type="erroneous initiation">
        <sequence resource="EMBL-CDS" id="AAB03341"/>
    </conflict>
</comment>
<comment type="sequence caution" evidence="59">
    <conflict type="erroneous initiation">
        <sequence resource="EMBL-CDS" id="BAH11167"/>
    </conflict>
</comment>
<comment type="online information" name="Wikipedia">
    <link uri="https://en.wikipedia.org/wiki/Arylsulfatase_A"/>
    <text>Arylsulfatase A entry</text>
</comment>
<comment type="online information" name="Arylsulfatase A (ARSA)">
    <link uri="https://databases.lovd.nl/shared/genes/ARSA"/>
    <text>Leiden Open Variation Database (LOVD)</text>
</comment>
<proteinExistence type="evidence at protein level"/>